<dbReference type="EMBL" id="Z21943">
    <property type="protein sequence ID" value="CAA79937.1"/>
    <property type="molecule type" value="mRNA"/>
</dbReference>
<dbReference type="EMBL" id="U00115">
    <property type="protein sequence ID" value="AAC50054.1"/>
    <property type="molecule type" value="mRNA"/>
</dbReference>
<dbReference type="EMBL" id="S67779">
    <property type="status" value="NOT_ANNOTATED_CDS"/>
    <property type="molecule type" value="mRNA"/>
</dbReference>
<dbReference type="EMBL" id="EU139066">
    <property type="protein sequence ID" value="ABX45135.1"/>
    <property type="molecule type" value="mRNA"/>
</dbReference>
<dbReference type="EMBL" id="AC072022">
    <property type="status" value="NOT_ANNOTATED_CDS"/>
    <property type="molecule type" value="Genomic_DNA"/>
</dbReference>
<dbReference type="EMBL" id="CH471052">
    <property type="protein sequence ID" value="EAW78140.1"/>
    <property type="molecule type" value="Genomic_DNA"/>
</dbReference>
<dbReference type="EMBL" id="CH471052">
    <property type="protein sequence ID" value="EAW78141.1"/>
    <property type="molecule type" value="Genomic_DNA"/>
</dbReference>
<dbReference type="EMBL" id="BC150184">
    <property type="protein sequence ID" value="AAI50185.1"/>
    <property type="molecule type" value="mRNA"/>
</dbReference>
<dbReference type="CCDS" id="CCDS3289.1">
    <molecule id="P41182-1"/>
</dbReference>
<dbReference type="CCDS" id="CCDS46975.1">
    <molecule id="P41182-2"/>
</dbReference>
<dbReference type="PIR" id="A48752">
    <property type="entry name" value="A48752"/>
</dbReference>
<dbReference type="PIR" id="I52586">
    <property type="entry name" value="I52586"/>
</dbReference>
<dbReference type="RefSeq" id="NP_001124317.1">
    <molecule id="P41182-1"/>
    <property type="nucleotide sequence ID" value="NM_001130845.2"/>
</dbReference>
<dbReference type="RefSeq" id="NP_001128210.1">
    <molecule id="P41182-2"/>
    <property type="nucleotide sequence ID" value="NM_001134738.1"/>
</dbReference>
<dbReference type="RefSeq" id="NP_001697.2">
    <molecule id="P41182-1"/>
    <property type="nucleotide sequence ID" value="NM_001706.4"/>
</dbReference>
<dbReference type="RefSeq" id="XP_005247751.1">
    <molecule id="P41182-1"/>
    <property type="nucleotide sequence ID" value="XM_005247694.5"/>
</dbReference>
<dbReference type="RefSeq" id="XP_011511364.1">
    <molecule id="P41182-2"/>
    <property type="nucleotide sequence ID" value="XM_011513062.4"/>
</dbReference>
<dbReference type="RefSeq" id="XP_047304611.1">
    <molecule id="P41182-1"/>
    <property type="nucleotide sequence ID" value="XM_047448655.1"/>
</dbReference>
<dbReference type="PDB" id="1R28">
    <property type="method" value="X-ray"/>
    <property type="resolution" value="2.20 A"/>
    <property type="chains" value="A/B=5-129"/>
</dbReference>
<dbReference type="PDB" id="1R29">
    <property type="method" value="X-ray"/>
    <property type="resolution" value="1.30 A"/>
    <property type="chains" value="A=5-129"/>
</dbReference>
<dbReference type="PDB" id="1R2B">
    <property type="method" value="X-ray"/>
    <property type="resolution" value="2.20 A"/>
    <property type="chains" value="A/B=5-129"/>
</dbReference>
<dbReference type="PDB" id="2EN2">
    <property type="method" value="NMR"/>
    <property type="chains" value="A=598-626"/>
</dbReference>
<dbReference type="PDB" id="2EOS">
    <property type="method" value="NMR"/>
    <property type="chains" value="A=626-654"/>
</dbReference>
<dbReference type="PDB" id="2LCE">
    <property type="method" value="NMR"/>
    <property type="chains" value="A=540-602"/>
</dbReference>
<dbReference type="PDB" id="2YRM">
    <property type="method" value="NMR"/>
    <property type="chains" value="A=515-544"/>
</dbReference>
<dbReference type="PDB" id="3BIM">
    <property type="method" value="X-ray"/>
    <property type="resolution" value="2.60 A"/>
    <property type="chains" value="A/B/C/D/E/F/G/H=5-129"/>
</dbReference>
<dbReference type="PDB" id="3E4U">
    <property type="method" value="X-ray"/>
    <property type="resolution" value="2.10 A"/>
    <property type="chains" value="A/B/C/D/E/F=5-129"/>
</dbReference>
<dbReference type="PDB" id="3LBZ">
    <property type="method" value="X-ray"/>
    <property type="resolution" value="2.30 A"/>
    <property type="chains" value="A/B=5-129"/>
</dbReference>
<dbReference type="PDB" id="4CP3">
    <property type="method" value="X-ray"/>
    <property type="resolution" value="2.30 A"/>
    <property type="chains" value="A/B=9-128"/>
</dbReference>
<dbReference type="PDB" id="4U2M">
    <property type="method" value="X-ray"/>
    <property type="resolution" value="2.23 A"/>
    <property type="chains" value="A/B/C/D=5-129"/>
</dbReference>
<dbReference type="PDB" id="5H7G">
    <property type="method" value="X-ray"/>
    <property type="resolution" value="1.85 A"/>
    <property type="chains" value="A/B=5-129"/>
</dbReference>
<dbReference type="PDB" id="5H7H">
    <property type="method" value="X-ray"/>
    <property type="resolution" value="1.95 A"/>
    <property type="chains" value="A=5-129"/>
</dbReference>
<dbReference type="PDB" id="5MW2">
    <property type="method" value="X-ray"/>
    <property type="resolution" value="2.35 A"/>
    <property type="chains" value="A=5-129"/>
</dbReference>
<dbReference type="PDB" id="5MW6">
    <property type="method" value="X-ray"/>
    <property type="resolution" value="1.65 A"/>
    <property type="chains" value="A/B=5-129"/>
</dbReference>
<dbReference type="PDB" id="5MWD">
    <property type="method" value="X-ray"/>
    <property type="resolution" value="1.85 A"/>
    <property type="chains" value="A=5-129"/>
</dbReference>
<dbReference type="PDB" id="5N1X">
    <property type="method" value="X-ray"/>
    <property type="resolution" value="1.72 A"/>
    <property type="chains" value="A=9-128, B/C=7-127, D=9-125"/>
</dbReference>
<dbReference type="PDB" id="5N1Z">
    <property type="method" value="X-ray"/>
    <property type="resolution" value="1.81 A"/>
    <property type="chains" value="A=6-128"/>
</dbReference>
<dbReference type="PDB" id="5N20">
    <property type="method" value="X-ray"/>
    <property type="resolution" value="1.38 A"/>
    <property type="chains" value="A=6-128"/>
</dbReference>
<dbReference type="PDB" id="5N21">
    <property type="method" value="X-ray"/>
    <property type="resolution" value="1.58 A"/>
    <property type="chains" value="A/B=7-128"/>
</dbReference>
<dbReference type="PDB" id="5X4M">
    <property type="method" value="X-ray"/>
    <property type="resolution" value="1.65 A"/>
    <property type="chains" value="A=5-129"/>
</dbReference>
<dbReference type="PDB" id="5X4N">
    <property type="method" value="X-ray"/>
    <property type="resolution" value="1.94 A"/>
    <property type="chains" value="A=5-129"/>
</dbReference>
<dbReference type="PDB" id="5X4O">
    <property type="method" value="X-ray"/>
    <property type="resolution" value="2.05 A"/>
    <property type="chains" value="A=5-129"/>
</dbReference>
<dbReference type="PDB" id="5X4P">
    <property type="method" value="X-ray"/>
    <property type="resolution" value="2.06 A"/>
    <property type="chains" value="A=5-129"/>
</dbReference>
<dbReference type="PDB" id="5X4Q">
    <property type="method" value="X-ray"/>
    <property type="resolution" value="2.00 A"/>
    <property type="chains" value="A=5-129"/>
</dbReference>
<dbReference type="PDB" id="5X9O">
    <property type="method" value="X-ray"/>
    <property type="resolution" value="1.58 A"/>
    <property type="chains" value="A=5-129"/>
</dbReference>
<dbReference type="PDB" id="5X9P">
    <property type="method" value="X-ray"/>
    <property type="resolution" value="1.86 A"/>
    <property type="chains" value="A=5-129"/>
</dbReference>
<dbReference type="PDB" id="6C3L">
    <property type="method" value="X-ray"/>
    <property type="resolution" value="1.46 A"/>
    <property type="chains" value="A/B=5-129"/>
</dbReference>
<dbReference type="PDB" id="6C3N">
    <property type="method" value="X-ray"/>
    <property type="resolution" value="2.53 A"/>
    <property type="chains" value="A/B=1-129"/>
</dbReference>
<dbReference type="PDB" id="6CQ1">
    <property type="method" value="X-ray"/>
    <property type="resolution" value="1.70 A"/>
    <property type="chains" value="A/B=1-129"/>
</dbReference>
<dbReference type="PDB" id="6EW6">
    <property type="method" value="X-ray"/>
    <property type="resolution" value="1.39 A"/>
    <property type="chains" value="A=6-128"/>
</dbReference>
<dbReference type="PDB" id="6EW7">
    <property type="method" value="X-ray"/>
    <property type="resolution" value="1.60 A"/>
    <property type="chains" value="A/B=7-128"/>
</dbReference>
<dbReference type="PDB" id="6EW8">
    <property type="method" value="X-ray"/>
    <property type="resolution" value="1.84 A"/>
    <property type="chains" value="A=6-129"/>
</dbReference>
<dbReference type="PDB" id="6TBT">
    <property type="method" value="X-ray"/>
    <property type="resolution" value="1.63 A"/>
    <property type="chains" value="A/B=6-129"/>
</dbReference>
<dbReference type="PDB" id="6TCJ">
    <property type="method" value="X-ray"/>
    <property type="resolution" value="2.13 A"/>
    <property type="chains" value="A/B=6-129"/>
</dbReference>
<dbReference type="PDB" id="6TOF">
    <property type="method" value="X-ray"/>
    <property type="resolution" value="1.67 A"/>
    <property type="chains" value="A=5-129"/>
</dbReference>
<dbReference type="PDB" id="6TOG">
    <property type="method" value="X-ray"/>
    <property type="resolution" value="1.69 A"/>
    <property type="chains" value="A=5-129"/>
</dbReference>
<dbReference type="PDB" id="6TOH">
    <property type="method" value="X-ray"/>
    <property type="resolution" value="1.58 A"/>
    <property type="chains" value="A=5-129"/>
</dbReference>
<dbReference type="PDB" id="6TOI">
    <property type="method" value="X-ray"/>
    <property type="resolution" value="1.58 A"/>
    <property type="chains" value="A=5-129"/>
</dbReference>
<dbReference type="PDB" id="6TOJ">
    <property type="method" value="X-ray"/>
    <property type="resolution" value="1.85 A"/>
    <property type="chains" value="A=5-129"/>
</dbReference>
<dbReference type="PDB" id="6TOK">
    <property type="method" value="X-ray"/>
    <property type="resolution" value="1.43 A"/>
    <property type="chains" value="A=5-129"/>
</dbReference>
<dbReference type="PDB" id="6TOL">
    <property type="method" value="X-ray"/>
    <property type="resolution" value="1.64 A"/>
    <property type="chains" value="A=5-129"/>
</dbReference>
<dbReference type="PDB" id="6TOM">
    <property type="method" value="X-ray"/>
    <property type="resolution" value="1.90 A"/>
    <property type="chains" value="A=5-129"/>
</dbReference>
<dbReference type="PDB" id="6TON">
    <property type="method" value="X-ray"/>
    <property type="resolution" value="2.36 A"/>
    <property type="chains" value="A=5-129"/>
</dbReference>
<dbReference type="PDB" id="6TOO">
    <property type="method" value="X-ray"/>
    <property type="resolution" value="1.53 A"/>
    <property type="chains" value="A=5-129"/>
</dbReference>
<dbReference type="PDB" id="6XMX">
    <property type="method" value="EM"/>
    <property type="resolution" value="3.70 A"/>
    <property type="chains" value="A/B/C/D/E/F/G/H=5-360"/>
</dbReference>
<dbReference type="PDB" id="6XWF">
    <property type="method" value="X-ray"/>
    <property type="resolution" value="1.60 A"/>
    <property type="chains" value="A=6-129"/>
</dbReference>
<dbReference type="PDB" id="6XXS">
    <property type="method" value="X-ray"/>
    <property type="resolution" value="3.25 A"/>
    <property type="chains" value="A/B/E/F=6-129"/>
</dbReference>
<dbReference type="PDB" id="6XYX">
    <property type="method" value="X-ray"/>
    <property type="resolution" value="1.44 A"/>
    <property type="chains" value="A/B=6-129"/>
</dbReference>
<dbReference type="PDB" id="6XZZ">
    <property type="method" value="X-ray"/>
    <property type="resolution" value="1.39 A"/>
    <property type="chains" value="A=6-129"/>
</dbReference>
<dbReference type="PDB" id="6Y17">
    <property type="method" value="X-ray"/>
    <property type="resolution" value="1.56 A"/>
    <property type="chains" value="A/B=6-129"/>
</dbReference>
<dbReference type="PDB" id="6ZBU">
    <property type="method" value="X-ray"/>
    <property type="resolution" value="2.46 A"/>
    <property type="chains" value="A/B/E/F/I/J=6-129"/>
</dbReference>
<dbReference type="PDB" id="7BDE">
    <property type="method" value="X-ray"/>
    <property type="resolution" value="2.04 A"/>
    <property type="chains" value="A=5-129"/>
</dbReference>
<dbReference type="PDB" id="7GUD">
    <property type="method" value="X-ray"/>
    <property type="resolution" value="1.80 A"/>
    <property type="chains" value="A=5-129"/>
</dbReference>
<dbReference type="PDB" id="7GUE">
    <property type="method" value="X-ray"/>
    <property type="resolution" value="1.80 A"/>
    <property type="chains" value="A=5-129"/>
</dbReference>
<dbReference type="PDB" id="7GUF">
    <property type="method" value="X-ray"/>
    <property type="resolution" value="1.80 A"/>
    <property type="chains" value="A=5-129"/>
</dbReference>
<dbReference type="PDB" id="7GUG">
    <property type="method" value="X-ray"/>
    <property type="resolution" value="1.80 A"/>
    <property type="chains" value="A=5-129"/>
</dbReference>
<dbReference type="PDB" id="7GUH">
    <property type="method" value="X-ray"/>
    <property type="resolution" value="1.80 A"/>
    <property type="chains" value="A=5-129"/>
</dbReference>
<dbReference type="PDB" id="7GUI">
    <property type="method" value="X-ray"/>
    <property type="resolution" value="1.80 A"/>
    <property type="chains" value="A=5-129"/>
</dbReference>
<dbReference type="PDB" id="7GUJ">
    <property type="method" value="X-ray"/>
    <property type="resolution" value="1.80 A"/>
    <property type="chains" value="A=5-129"/>
</dbReference>
<dbReference type="PDB" id="7GUK">
    <property type="method" value="X-ray"/>
    <property type="resolution" value="1.80 A"/>
    <property type="chains" value="A=5-129"/>
</dbReference>
<dbReference type="PDB" id="7GUL">
    <property type="method" value="X-ray"/>
    <property type="resolution" value="1.80 A"/>
    <property type="chains" value="A=5-129"/>
</dbReference>
<dbReference type="PDB" id="7GUM">
    <property type="method" value="X-ray"/>
    <property type="resolution" value="1.80 A"/>
    <property type="chains" value="A=5-129"/>
</dbReference>
<dbReference type="PDB" id="7GUN">
    <property type="method" value="X-ray"/>
    <property type="resolution" value="1.80 A"/>
    <property type="chains" value="A=5-129"/>
</dbReference>
<dbReference type="PDB" id="7GUO">
    <property type="method" value="X-ray"/>
    <property type="resolution" value="1.80 A"/>
    <property type="chains" value="A=5-129"/>
</dbReference>
<dbReference type="PDB" id="7GUP">
    <property type="method" value="X-ray"/>
    <property type="resolution" value="1.80 A"/>
    <property type="chains" value="A=5-129"/>
</dbReference>
<dbReference type="PDB" id="7GUQ">
    <property type="method" value="X-ray"/>
    <property type="resolution" value="1.80 A"/>
    <property type="chains" value="A=5-129"/>
</dbReference>
<dbReference type="PDB" id="7GUR">
    <property type="method" value="X-ray"/>
    <property type="resolution" value="1.80 A"/>
    <property type="chains" value="A=5-129"/>
</dbReference>
<dbReference type="PDB" id="7GUS">
    <property type="method" value="X-ray"/>
    <property type="resolution" value="1.75 A"/>
    <property type="chains" value="A=5-129"/>
</dbReference>
<dbReference type="PDB" id="7GUT">
    <property type="method" value="X-ray"/>
    <property type="resolution" value="1.75 A"/>
    <property type="chains" value="A=5-129"/>
</dbReference>
<dbReference type="PDB" id="7GUU">
    <property type="method" value="X-ray"/>
    <property type="resolution" value="1.75 A"/>
    <property type="chains" value="A=5-129"/>
</dbReference>
<dbReference type="PDB" id="7GUV">
    <property type="method" value="X-ray"/>
    <property type="resolution" value="1.75 A"/>
    <property type="chains" value="A=5-129"/>
</dbReference>
<dbReference type="PDB" id="7GUW">
    <property type="method" value="X-ray"/>
    <property type="resolution" value="1.75 A"/>
    <property type="chains" value="A=5-129"/>
</dbReference>
<dbReference type="PDB" id="7GUX">
    <property type="method" value="X-ray"/>
    <property type="resolution" value="1.75 A"/>
    <property type="chains" value="A=5-129"/>
</dbReference>
<dbReference type="PDB" id="7GUY">
    <property type="method" value="X-ray"/>
    <property type="resolution" value="1.75 A"/>
    <property type="chains" value="A=5-129"/>
</dbReference>
<dbReference type="PDB" id="7GUZ">
    <property type="method" value="X-ray"/>
    <property type="resolution" value="1.75 A"/>
    <property type="chains" value="A=5-129"/>
</dbReference>
<dbReference type="PDB" id="7GV0">
    <property type="method" value="X-ray"/>
    <property type="resolution" value="1.75 A"/>
    <property type="chains" value="A=5-129"/>
</dbReference>
<dbReference type="PDB" id="7GV1">
    <property type="method" value="X-ray"/>
    <property type="resolution" value="1.75 A"/>
    <property type="chains" value="A=5-129"/>
</dbReference>
<dbReference type="PDB" id="7GV2">
    <property type="method" value="X-ray"/>
    <property type="resolution" value="1.75 A"/>
    <property type="chains" value="A=5-129"/>
</dbReference>
<dbReference type="PDB" id="7GV3">
    <property type="method" value="X-ray"/>
    <property type="resolution" value="1.75 A"/>
    <property type="chains" value="A=5-129"/>
</dbReference>
<dbReference type="PDB" id="7GV4">
    <property type="method" value="X-ray"/>
    <property type="resolution" value="1.75 A"/>
    <property type="chains" value="A=5-129"/>
</dbReference>
<dbReference type="PDB" id="7GV5">
    <property type="method" value="X-ray"/>
    <property type="resolution" value="1.75 A"/>
    <property type="chains" value="A=5-129"/>
</dbReference>
<dbReference type="PDB" id="7GV6">
    <property type="method" value="X-ray"/>
    <property type="resolution" value="1.75 A"/>
    <property type="chains" value="A=5-129"/>
</dbReference>
<dbReference type="PDB" id="7GV7">
    <property type="method" value="X-ray"/>
    <property type="resolution" value="1.85 A"/>
    <property type="chains" value="A=5-129"/>
</dbReference>
<dbReference type="PDB" id="7GV8">
    <property type="method" value="X-ray"/>
    <property type="resolution" value="1.85 A"/>
    <property type="chains" value="A=5-129"/>
</dbReference>
<dbReference type="PDB" id="7GV9">
    <property type="method" value="X-ray"/>
    <property type="resolution" value="1.85 A"/>
    <property type="chains" value="A=5-129"/>
</dbReference>
<dbReference type="PDB" id="7GVA">
    <property type="method" value="X-ray"/>
    <property type="resolution" value="1.85 A"/>
    <property type="chains" value="A=5-129"/>
</dbReference>
<dbReference type="PDB" id="7GVB">
    <property type="method" value="X-ray"/>
    <property type="resolution" value="1.85 A"/>
    <property type="chains" value="A=5-129"/>
</dbReference>
<dbReference type="PDB" id="7GVC">
    <property type="method" value="X-ray"/>
    <property type="resolution" value="1.85 A"/>
    <property type="chains" value="A=5-129"/>
</dbReference>
<dbReference type="PDB" id="7GVD">
    <property type="method" value="X-ray"/>
    <property type="resolution" value="1.85 A"/>
    <property type="chains" value="A=5-129"/>
</dbReference>
<dbReference type="PDB" id="7GVE">
    <property type="method" value="X-ray"/>
    <property type="resolution" value="1.85 A"/>
    <property type="chains" value="A=5-129"/>
</dbReference>
<dbReference type="PDB" id="7GVF">
    <property type="method" value="X-ray"/>
    <property type="resolution" value="1.85 A"/>
    <property type="chains" value="A=5-129"/>
</dbReference>
<dbReference type="PDB" id="7GVG">
    <property type="method" value="X-ray"/>
    <property type="resolution" value="1.85 A"/>
    <property type="chains" value="A=5-129"/>
</dbReference>
<dbReference type="PDB" id="7GVH">
    <property type="method" value="X-ray"/>
    <property type="resolution" value="1.85 A"/>
    <property type="chains" value="A=5-129"/>
</dbReference>
<dbReference type="PDB" id="7GVI">
    <property type="method" value="X-ray"/>
    <property type="resolution" value="1.85 A"/>
    <property type="chains" value="A=5-129"/>
</dbReference>
<dbReference type="PDB" id="7GVJ">
    <property type="method" value="X-ray"/>
    <property type="resolution" value="1.85 A"/>
    <property type="chains" value="A=5-129"/>
</dbReference>
<dbReference type="PDB" id="7GVK">
    <property type="method" value="X-ray"/>
    <property type="resolution" value="1.85 A"/>
    <property type="chains" value="A=5-129"/>
</dbReference>
<dbReference type="PDB" id="7GVL">
    <property type="method" value="X-ray"/>
    <property type="resolution" value="1.85 A"/>
    <property type="chains" value="A=5-129"/>
</dbReference>
<dbReference type="PDB" id="7GVM">
    <property type="method" value="X-ray"/>
    <property type="resolution" value="1.90 A"/>
    <property type="chains" value="A=5-129"/>
</dbReference>
<dbReference type="PDB" id="7GVN">
    <property type="method" value="X-ray"/>
    <property type="resolution" value="1.90 A"/>
    <property type="chains" value="A=5-129"/>
</dbReference>
<dbReference type="PDB" id="7GVO">
    <property type="method" value="X-ray"/>
    <property type="resolution" value="1.90 A"/>
    <property type="chains" value="A=5-129"/>
</dbReference>
<dbReference type="PDB" id="7GVP">
    <property type="method" value="X-ray"/>
    <property type="resolution" value="1.90 A"/>
    <property type="chains" value="A=5-129"/>
</dbReference>
<dbReference type="PDB" id="7GVQ">
    <property type="method" value="X-ray"/>
    <property type="resolution" value="1.90 A"/>
    <property type="chains" value="A=5-129"/>
</dbReference>
<dbReference type="PDB" id="7GVR">
    <property type="method" value="X-ray"/>
    <property type="resolution" value="1.90 A"/>
    <property type="chains" value="A=5-129"/>
</dbReference>
<dbReference type="PDB" id="7GVS">
    <property type="method" value="X-ray"/>
    <property type="resolution" value="1.90 A"/>
    <property type="chains" value="A=5-129"/>
</dbReference>
<dbReference type="PDB" id="7GVT">
    <property type="method" value="X-ray"/>
    <property type="resolution" value="1.90 A"/>
    <property type="chains" value="A=5-129"/>
</dbReference>
<dbReference type="PDB" id="7GVU">
    <property type="method" value="X-ray"/>
    <property type="resolution" value="1.90 A"/>
    <property type="chains" value="A=5-129"/>
</dbReference>
<dbReference type="PDB" id="7GVV">
    <property type="method" value="X-ray"/>
    <property type="resolution" value="1.90 A"/>
    <property type="chains" value="A=5-129"/>
</dbReference>
<dbReference type="PDB" id="7GVW">
    <property type="method" value="X-ray"/>
    <property type="resolution" value="1.90 A"/>
    <property type="chains" value="A=5-129"/>
</dbReference>
<dbReference type="PDB" id="7GVX">
    <property type="method" value="X-ray"/>
    <property type="resolution" value="1.90 A"/>
    <property type="chains" value="A=5-129"/>
</dbReference>
<dbReference type="PDB" id="7GVY">
    <property type="method" value="X-ray"/>
    <property type="resolution" value="1.90 A"/>
    <property type="chains" value="A=5-129"/>
</dbReference>
<dbReference type="PDB" id="7GVZ">
    <property type="method" value="X-ray"/>
    <property type="resolution" value="1.90 A"/>
    <property type="chains" value="A=5-129"/>
</dbReference>
<dbReference type="PDB" id="7GW0">
    <property type="method" value="X-ray"/>
    <property type="resolution" value="1.90 A"/>
    <property type="chains" value="A=5-129"/>
</dbReference>
<dbReference type="PDB" id="7GW1">
    <property type="method" value="X-ray"/>
    <property type="resolution" value="1.75 A"/>
    <property type="chains" value="A=5-129"/>
</dbReference>
<dbReference type="PDB" id="7GW2">
    <property type="method" value="X-ray"/>
    <property type="resolution" value="1.75 A"/>
    <property type="chains" value="A=5-129"/>
</dbReference>
<dbReference type="PDB" id="7GW3">
    <property type="method" value="X-ray"/>
    <property type="resolution" value="1.75 A"/>
    <property type="chains" value="A=5-129"/>
</dbReference>
<dbReference type="PDB" id="7GW4">
    <property type="method" value="X-ray"/>
    <property type="resolution" value="1.75 A"/>
    <property type="chains" value="A=5-129"/>
</dbReference>
<dbReference type="PDB" id="7GW5">
    <property type="method" value="X-ray"/>
    <property type="resolution" value="1.75 A"/>
    <property type="chains" value="A=5-129"/>
</dbReference>
<dbReference type="PDB" id="7GW6">
    <property type="method" value="X-ray"/>
    <property type="resolution" value="1.75 A"/>
    <property type="chains" value="A=5-129"/>
</dbReference>
<dbReference type="PDB" id="7GW7">
    <property type="method" value="X-ray"/>
    <property type="resolution" value="1.75 A"/>
    <property type="chains" value="A=5-129"/>
</dbReference>
<dbReference type="PDB" id="7GW8">
    <property type="method" value="X-ray"/>
    <property type="resolution" value="1.75 A"/>
    <property type="chains" value="A=5-129"/>
</dbReference>
<dbReference type="PDB" id="7GW9">
    <property type="method" value="X-ray"/>
    <property type="resolution" value="1.75 A"/>
    <property type="chains" value="A=5-129"/>
</dbReference>
<dbReference type="PDB" id="7GWA">
    <property type="method" value="X-ray"/>
    <property type="resolution" value="1.75 A"/>
    <property type="chains" value="A=5-129"/>
</dbReference>
<dbReference type="PDB" id="7GWB">
    <property type="method" value="X-ray"/>
    <property type="resolution" value="1.75 A"/>
    <property type="chains" value="A=5-129"/>
</dbReference>
<dbReference type="PDB" id="7GWC">
    <property type="method" value="X-ray"/>
    <property type="resolution" value="1.75 A"/>
    <property type="chains" value="A=5-129"/>
</dbReference>
<dbReference type="PDB" id="7GWD">
    <property type="method" value="X-ray"/>
    <property type="resolution" value="1.75 A"/>
    <property type="chains" value="A=5-129"/>
</dbReference>
<dbReference type="PDB" id="7GWE">
    <property type="method" value="X-ray"/>
    <property type="resolution" value="1.75 A"/>
    <property type="chains" value="A=5-129"/>
</dbReference>
<dbReference type="PDB" id="7GWF">
    <property type="method" value="X-ray"/>
    <property type="resolution" value="1.75 A"/>
    <property type="chains" value="A=5-129"/>
</dbReference>
<dbReference type="PDB" id="7GWG">
    <property type="method" value="X-ray"/>
    <property type="resolution" value="1.90 A"/>
    <property type="chains" value="A=5-129"/>
</dbReference>
<dbReference type="PDB" id="7GWH">
    <property type="method" value="X-ray"/>
    <property type="resolution" value="1.90 A"/>
    <property type="chains" value="A=5-129"/>
</dbReference>
<dbReference type="PDB" id="7GWI">
    <property type="method" value="X-ray"/>
    <property type="resolution" value="1.90 A"/>
    <property type="chains" value="A=5-129"/>
</dbReference>
<dbReference type="PDB" id="7GWJ">
    <property type="method" value="X-ray"/>
    <property type="resolution" value="1.90 A"/>
    <property type="chains" value="A=5-129"/>
</dbReference>
<dbReference type="PDB" id="7GWK">
    <property type="method" value="X-ray"/>
    <property type="resolution" value="1.90 A"/>
    <property type="chains" value="A=5-129"/>
</dbReference>
<dbReference type="PDB" id="7GWL">
    <property type="method" value="X-ray"/>
    <property type="resolution" value="1.90 A"/>
    <property type="chains" value="A=5-129"/>
</dbReference>
<dbReference type="PDB" id="7GWM">
    <property type="method" value="X-ray"/>
    <property type="resolution" value="1.90 A"/>
    <property type="chains" value="A=5-129"/>
</dbReference>
<dbReference type="PDB" id="7GWN">
    <property type="method" value="X-ray"/>
    <property type="resolution" value="1.90 A"/>
    <property type="chains" value="A=5-129"/>
</dbReference>
<dbReference type="PDB" id="7GWO">
    <property type="method" value="X-ray"/>
    <property type="resolution" value="1.90 A"/>
    <property type="chains" value="A=5-129"/>
</dbReference>
<dbReference type="PDB" id="7GWP">
    <property type="method" value="X-ray"/>
    <property type="resolution" value="1.90 A"/>
    <property type="chains" value="A=5-129"/>
</dbReference>
<dbReference type="PDB" id="7GWQ">
    <property type="method" value="X-ray"/>
    <property type="resolution" value="1.90 A"/>
    <property type="chains" value="A=5-129"/>
</dbReference>
<dbReference type="PDB" id="7GWR">
    <property type="method" value="X-ray"/>
    <property type="resolution" value="1.90 A"/>
    <property type="chains" value="A=5-129"/>
</dbReference>
<dbReference type="PDB" id="7GWS">
    <property type="method" value="X-ray"/>
    <property type="resolution" value="1.90 A"/>
    <property type="chains" value="A=5-129"/>
</dbReference>
<dbReference type="PDB" id="7GWT">
    <property type="method" value="X-ray"/>
    <property type="resolution" value="1.90 A"/>
    <property type="chains" value="A=5-129"/>
</dbReference>
<dbReference type="PDB" id="7GWU">
    <property type="method" value="X-ray"/>
    <property type="resolution" value="1.90 A"/>
    <property type="chains" value="A=5-129"/>
</dbReference>
<dbReference type="PDB" id="7GWV">
    <property type="method" value="X-ray"/>
    <property type="resolution" value="1.70 A"/>
    <property type="chains" value="A=5-129"/>
</dbReference>
<dbReference type="PDB" id="7GWW">
    <property type="method" value="X-ray"/>
    <property type="resolution" value="1.70 A"/>
    <property type="chains" value="A=5-129"/>
</dbReference>
<dbReference type="PDB" id="7GWX">
    <property type="method" value="X-ray"/>
    <property type="resolution" value="1.70 A"/>
    <property type="chains" value="A=5-129"/>
</dbReference>
<dbReference type="PDB" id="7GWY">
    <property type="method" value="X-ray"/>
    <property type="resolution" value="1.70 A"/>
    <property type="chains" value="A=5-129"/>
</dbReference>
<dbReference type="PDB" id="7GWZ">
    <property type="method" value="X-ray"/>
    <property type="resolution" value="1.70 A"/>
    <property type="chains" value="A=5-129"/>
</dbReference>
<dbReference type="PDB" id="7GX0">
    <property type="method" value="X-ray"/>
    <property type="resolution" value="1.70 A"/>
    <property type="chains" value="A=5-129"/>
</dbReference>
<dbReference type="PDB" id="7GX1">
    <property type="method" value="X-ray"/>
    <property type="resolution" value="1.70 A"/>
    <property type="chains" value="A=5-129"/>
</dbReference>
<dbReference type="PDB" id="7GX2">
    <property type="method" value="X-ray"/>
    <property type="resolution" value="1.70 A"/>
    <property type="chains" value="A=5-129"/>
</dbReference>
<dbReference type="PDB" id="7GX3">
    <property type="method" value="X-ray"/>
    <property type="resolution" value="1.70 A"/>
    <property type="chains" value="A=5-129"/>
</dbReference>
<dbReference type="PDB" id="7GX4">
    <property type="method" value="X-ray"/>
    <property type="resolution" value="1.70 A"/>
    <property type="chains" value="A=5-129"/>
</dbReference>
<dbReference type="PDB" id="7GX5">
    <property type="method" value="X-ray"/>
    <property type="resolution" value="1.70 A"/>
    <property type="chains" value="A=5-129"/>
</dbReference>
<dbReference type="PDB" id="7GX6">
    <property type="method" value="X-ray"/>
    <property type="resolution" value="1.70 A"/>
    <property type="chains" value="A=5-129"/>
</dbReference>
<dbReference type="PDB" id="7GX7">
    <property type="method" value="X-ray"/>
    <property type="resolution" value="1.70 A"/>
    <property type="chains" value="A=5-129"/>
</dbReference>
<dbReference type="PDB" id="7GX8">
    <property type="method" value="X-ray"/>
    <property type="resolution" value="1.70 A"/>
    <property type="chains" value="A=5-129"/>
</dbReference>
<dbReference type="PDB" id="7GX9">
    <property type="method" value="X-ray"/>
    <property type="resolution" value="1.70 A"/>
    <property type="chains" value="A=5-129"/>
</dbReference>
<dbReference type="PDB" id="7GXA">
    <property type="method" value="X-ray"/>
    <property type="resolution" value="1.95 A"/>
    <property type="chains" value="A=5-129"/>
</dbReference>
<dbReference type="PDB" id="7GXB">
    <property type="method" value="X-ray"/>
    <property type="resolution" value="1.95 A"/>
    <property type="chains" value="A=5-129"/>
</dbReference>
<dbReference type="PDB" id="7GXC">
    <property type="method" value="X-ray"/>
    <property type="resolution" value="1.95 A"/>
    <property type="chains" value="A=5-129"/>
</dbReference>
<dbReference type="PDB" id="7GXD">
    <property type="method" value="X-ray"/>
    <property type="resolution" value="1.95 A"/>
    <property type="chains" value="A=5-129"/>
</dbReference>
<dbReference type="PDB" id="7GXE">
    <property type="method" value="X-ray"/>
    <property type="resolution" value="1.95 A"/>
    <property type="chains" value="A=5-129"/>
</dbReference>
<dbReference type="PDB" id="7GXF">
    <property type="method" value="X-ray"/>
    <property type="resolution" value="1.95 A"/>
    <property type="chains" value="A=5-129"/>
</dbReference>
<dbReference type="PDB" id="7GXG">
    <property type="method" value="X-ray"/>
    <property type="resolution" value="1.95 A"/>
    <property type="chains" value="A=5-129"/>
</dbReference>
<dbReference type="PDB" id="7GXH">
    <property type="method" value="X-ray"/>
    <property type="resolution" value="1.95 A"/>
    <property type="chains" value="A=5-129"/>
</dbReference>
<dbReference type="PDB" id="7GXI">
    <property type="method" value="X-ray"/>
    <property type="resolution" value="1.95 A"/>
    <property type="chains" value="A=5-129"/>
</dbReference>
<dbReference type="PDB" id="7GXJ">
    <property type="method" value="X-ray"/>
    <property type="resolution" value="1.95 A"/>
    <property type="chains" value="A=5-129"/>
</dbReference>
<dbReference type="PDB" id="7GXK">
    <property type="method" value="X-ray"/>
    <property type="resolution" value="1.95 A"/>
    <property type="chains" value="A=5-129"/>
</dbReference>
<dbReference type="PDB" id="7GXL">
    <property type="method" value="X-ray"/>
    <property type="resolution" value="1.95 A"/>
    <property type="chains" value="A=5-129"/>
</dbReference>
<dbReference type="PDB" id="7GXM">
    <property type="method" value="X-ray"/>
    <property type="resolution" value="1.95 A"/>
    <property type="chains" value="A=5-129"/>
</dbReference>
<dbReference type="PDB" id="7GXN">
    <property type="method" value="X-ray"/>
    <property type="resolution" value="1.95 A"/>
    <property type="chains" value="A=5-129"/>
</dbReference>
<dbReference type="PDB" id="7GXO">
    <property type="method" value="X-ray"/>
    <property type="resolution" value="1.95 A"/>
    <property type="chains" value="A=5-129"/>
</dbReference>
<dbReference type="PDB" id="7GXP">
    <property type="method" value="X-ray"/>
    <property type="resolution" value="1.85 A"/>
    <property type="chains" value="A=5-129"/>
</dbReference>
<dbReference type="PDB" id="7GXQ">
    <property type="method" value="X-ray"/>
    <property type="resolution" value="1.85 A"/>
    <property type="chains" value="A=5-129"/>
</dbReference>
<dbReference type="PDB" id="7GXR">
    <property type="method" value="X-ray"/>
    <property type="resolution" value="1.85 A"/>
    <property type="chains" value="A=5-129"/>
</dbReference>
<dbReference type="PDB" id="7GXS">
    <property type="method" value="X-ray"/>
    <property type="resolution" value="1.85 A"/>
    <property type="chains" value="A=5-129"/>
</dbReference>
<dbReference type="PDB" id="7GXT">
    <property type="method" value="X-ray"/>
    <property type="resolution" value="1.85 A"/>
    <property type="chains" value="A=5-129"/>
</dbReference>
<dbReference type="PDB" id="7GXU">
    <property type="method" value="X-ray"/>
    <property type="resolution" value="1.85 A"/>
    <property type="chains" value="A=5-129"/>
</dbReference>
<dbReference type="PDB" id="7GXV">
    <property type="method" value="X-ray"/>
    <property type="resolution" value="1.85 A"/>
    <property type="chains" value="A=5-129"/>
</dbReference>
<dbReference type="PDB" id="7GXW">
    <property type="method" value="X-ray"/>
    <property type="resolution" value="1.85 A"/>
    <property type="chains" value="A=5-129"/>
</dbReference>
<dbReference type="PDB" id="7GXX">
    <property type="method" value="X-ray"/>
    <property type="resolution" value="1.85 A"/>
    <property type="chains" value="A=5-129"/>
</dbReference>
<dbReference type="PDB" id="7GXY">
    <property type="method" value="X-ray"/>
    <property type="resolution" value="1.85 A"/>
    <property type="chains" value="A=5-129"/>
</dbReference>
<dbReference type="PDB" id="7GXZ">
    <property type="method" value="X-ray"/>
    <property type="resolution" value="1.85 A"/>
    <property type="chains" value="A=5-129"/>
</dbReference>
<dbReference type="PDB" id="7GY0">
    <property type="method" value="X-ray"/>
    <property type="resolution" value="1.85 A"/>
    <property type="chains" value="A=5-129"/>
</dbReference>
<dbReference type="PDB" id="7GY1">
    <property type="method" value="X-ray"/>
    <property type="resolution" value="1.85 A"/>
    <property type="chains" value="A=5-129"/>
</dbReference>
<dbReference type="PDB" id="7GY2">
    <property type="method" value="X-ray"/>
    <property type="resolution" value="1.85 A"/>
    <property type="chains" value="A=5-129"/>
</dbReference>
<dbReference type="PDB" id="7GY3">
    <property type="method" value="X-ray"/>
    <property type="resolution" value="1.85 A"/>
    <property type="chains" value="A=5-129"/>
</dbReference>
<dbReference type="PDB" id="7LWE">
    <property type="method" value="X-ray"/>
    <property type="resolution" value="1.17 A"/>
    <property type="chains" value="A=1-129"/>
</dbReference>
<dbReference type="PDB" id="7LWF">
    <property type="method" value="X-ray"/>
    <property type="resolution" value="1.22 A"/>
    <property type="chains" value="A=5-129"/>
</dbReference>
<dbReference type="PDB" id="7LWG">
    <property type="method" value="X-ray"/>
    <property type="resolution" value="1.30 A"/>
    <property type="chains" value="A/B=5-129"/>
</dbReference>
<dbReference type="PDB" id="7LZQ">
    <property type="method" value="X-ray"/>
    <property type="resolution" value="1.71 A"/>
    <property type="chains" value="A=1-129"/>
</dbReference>
<dbReference type="PDB" id="7LZR">
    <property type="method" value="X-ray"/>
    <property type="resolution" value="1.34 A"/>
    <property type="chains" value="A/B/C/D=5-129"/>
</dbReference>
<dbReference type="PDB" id="7LZS">
    <property type="method" value="X-ray"/>
    <property type="resolution" value="1.49 A"/>
    <property type="chains" value="A=5-129"/>
</dbReference>
<dbReference type="PDB" id="7OKD">
    <property type="method" value="X-ray"/>
    <property type="resolution" value="1.94 A"/>
    <property type="chains" value="A=5-129"/>
</dbReference>
<dbReference type="PDB" id="7OKE">
    <property type="method" value="X-ray"/>
    <property type="resolution" value="1.48 A"/>
    <property type="chains" value="A=5-129"/>
</dbReference>
<dbReference type="PDB" id="7OKF">
    <property type="method" value="X-ray"/>
    <property type="resolution" value="1.60 A"/>
    <property type="chains" value="A=5-129"/>
</dbReference>
<dbReference type="PDB" id="7OKG">
    <property type="method" value="X-ray"/>
    <property type="resolution" value="1.32 A"/>
    <property type="chains" value="A=5-129"/>
</dbReference>
<dbReference type="PDB" id="7OKH">
    <property type="method" value="X-ray"/>
    <property type="resolution" value="1.52 A"/>
    <property type="chains" value="A=5-129"/>
</dbReference>
<dbReference type="PDB" id="7OKI">
    <property type="method" value="X-ray"/>
    <property type="resolution" value="1.61 A"/>
    <property type="chains" value="A=5-129"/>
</dbReference>
<dbReference type="PDB" id="7OKJ">
    <property type="method" value="X-ray"/>
    <property type="resolution" value="1.43 A"/>
    <property type="chains" value="A=5-129"/>
</dbReference>
<dbReference type="PDB" id="7OKK">
    <property type="method" value="X-ray"/>
    <property type="resolution" value="2.05 A"/>
    <property type="chains" value="A=5-129"/>
</dbReference>
<dbReference type="PDB" id="7OKL">
    <property type="method" value="X-ray"/>
    <property type="resolution" value="1.20 A"/>
    <property type="chains" value="A=5-129"/>
</dbReference>
<dbReference type="PDB" id="7OKM">
    <property type="method" value="X-ray"/>
    <property type="resolution" value="1.48 A"/>
    <property type="chains" value="A=5-129"/>
</dbReference>
<dbReference type="PDB" id="7Q7R">
    <property type="method" value="X-ray"/>
    <property type="resolution" value="1.70 A"/>
    <property type="chains" value="A=5-129"/>
</dbReference>
<dbReference type="PDB" id="7Q7S">
    <property type="method" value="X-ray"/>
    <property type="resolution" value="1.44 A"/>
    <property type="chains" value="A=5-129"/>
</dbReference>
<dbReference type="PDB" id="7Q7T">
    <property type="method" value="X-ray"/>
    <property type="resolution" value="1.46 A"/>
    <property type="chains" value="A=5-129"/>
</dbReference>
<dbReference type="PDB" id="7Q7U">
    <property type="method" value="X-ray"/>
    <property type="resolution" value="1.78 A"/>
    <property type="chains" value="A=5-129"/>
</dbReference>
<dbReference type="PDB" id="7Q7V">
    <property type="method" value="X-ray"/>
    <property type="resolution" value="1.81 A"/>
    <property type="chains" value="A=5-129"/>
</dbReference>
<dbReference type="PDB" id="7QK0">
    <property type="method" value="X-ray"/>
    <property type="resolution" value="1.96 A"/>
    <property type="chains" value="A=5-129"/>
</dbReference>
<dbReference type="PDB" id="7RUW">
    <property type="method" value="X-ray"/>
    <property type="resolution" value="1.30 A"/>
    <property type="chains" value="A=5-129"/>
</dbReference>
<dbReference type="PDB" id="7RUX">
    <property type="method" value="X-ray"/>
    <property type="resolution" value="1.30 A"/>
    <property type="chains" value="A=5-129"/>
</dbReference>
<dbReference type="PDB" id="7RUY">
    <property type="method" value="X-ray"/>
    <property type="resolution" value="1.27 A"/>
    <property type="chains" value="A=5-129"/>
</dbReference>
<dbReference type="PDB" id="7RUZ">
    <property type="method" value="X-ray"/>
    <property type="resolution" value="1.62 A"/>
    <property type="chains" value="A=5-129"/>
</dbReference>
<dbReference type="PDB" id="7RV0">
    <property type="method" value="X-ray"/>
    <property type="resolution" value="1.45 A"/>
    <property type="chains" value="A=5-129"/>
</dbReference>
<dbReference type="PDB" id="7RV1">
    <property type="method" value="X-ray"/>
    <property type="resolution" value="1.17 A"/>
    <property type="chains" value="A=5-129"/>
</dbReference>
<dbReference type="PDB" id="7RV2">
    <property type="method" value="X-ray"/>
    <property type="resolution" value="1.29 A"/>
    <property type="chains" value="A=5-129"/>
</dbReference>
<dbReference type="PDB" id="7RV3">
    <property type="method" value="X-ray"/>
    <property type="resolution" value="1.35 A"/>
    <property type="chains" value="A=5-129"/>
</dbReference>
<dbReference type="PDB" id="7RV4">
    <property type="method" value="X-ray"/>
    <property type="resolution" value="1.25 A"/>
    <property type="chains" value="A=5-129"/>
</dbReference>
<dbReference type="PDB" id="7RV5">
    <property type="method" value="X-ray"/>
    <property type="resolution" value="2.21 A"/>
    <property type="chains" value="A=5-129"/>
</dbReference>
<dbReference type="PDB" id="7RV6">
    <property type="method" value="X-ray"/>
    <property type="resolution" value="1.68 A"/>
    <property type="chains" value="A=5-129"/>
</dbReference>
<dbReference type="PDB" id="7RV7">
    <property type="method" value="X-ray"/>
    <property type="resolution" value="1.63 A"/>
    <property type="chains" value="A=5-129"/>
</dbReference>
<dbReference type="PDB" id="7RV8">
    <property type="method" value="X-ray"/>
    <property type="resolution" value="1.25 A"/>
    <property type="chains" value="A=5-129"/>
</dbReference>
<dbReference type="PDB" id="7RV9">
    <property type="method" value="X-ray"/>
    <property type="resolution" value="1.50 A"/>
    <property type="chains" value="A=5-129"/>
</dbReference>
<dbReference type="PDB" id="7T0S">
    <property type="method" value="X-ray"/>
    <property type="resolution" value="1.86 A"/>
    <property type="chains" value="A/B/C=5-129"/>
</dbReference>
<dbReference type="PDB" id="7T0T">
    <property type="method" value="X-ray"/>
    <property type="resolution" value="2.00 A"/>
    <property type="chains" value="A/B/C/D/E/F=5-129"/>
</dbReference>
<dbReference type="PDB" id="7T0U">
    <property type="method" value="X-ray"/>
    <property type="resolution" value="1.49 A"/>
    <property type="chains" value="A/B/C/D=5-129"/>
</dbReference>
<dbReference type="PDB" id="7ZWN">
    <property type="method" value="X-ray"/>
    <property type="resolution" value="2.05 A"/>
    <property type="chains" value="A=5-129"/>
</dbReference>
<dbReference type="PDB" id="7ZWO">
    <property type="method" value="X-ray"/>
    <property type="resolution" value="1.39 A"/>
    <property type="chains" value="A=5-129"/>
</dbReference>
<dbReference type="PDB" id="7ZWP">
    <property type="method" value="X-ray"/>
    <property type="resolution" value="1.85 A"/>
    <property type="chains" value="A=5-129"/>
</dbReference>
<dbReference type="PDB" id="7ZWQ">
    <property type="method" value="X-ray"/>
    <property type="resolution" value="1.65 A"/>
    <property type="chains" value="A=5-129"/>
</dbReference>
<dbReference type="PDB" id="7ZWR">
    <property type="method" value="X-ray"/>
    <property type="resolution" value="1.47 A"/>
    <property type="chains" value="A=5-129"/>
</dbReference>
<dbReference type="PDB" id="7ZWS">
    <property type="method" value="X-ray"/>
    <property type="resolution" value="1.53 A"/>
    <property type="chains" value="A=5-129"/>
</dbReference>
<dbReference type="PDB" id="7ZWT">
    <property type="method" value="X-ray"/>
    <property type="resolution" value="1.94 A"/>
    <property type="chains" value="A=5-129"/>
</dbReference>
<dbReference type="PDB" id="7ZWU">
    <property type="method" value="X-ray"/>
    <property type="resolution" value="1.56 A"/>
    <property type="chains" value="A=5-129"/>
</dbReference>
<dbReference type="PDB" id="7ZWV">
    <property type="method" value="X-ray"/>
    <property type="resolution" value="1.52 A"/>
    <property type="chains" value="A=5-129"/>
</dbReference>
<dbReference type="PDB" id="7ZWW">
    <property type="method" value="X-ray"/>
    <property type="resolution" value="1.67 A"/>
    <property type="chains" value="A=5-129"/>
</dbReference>
<dbReference type="PDB" id="7ZWX">
    <property type="method" value="X-ray"/>
    <property type="resolution" value="1.38 A"/>
    <property type="chains" value="A=5-129"/>
</dbReference>
<dbReference type="PDB" id="7ZWY">
    <property type="method" value="X-ray"/>
    <property type="resolution" value="1.65 A"/>
    <property type="chains" value="A=5-129"/>
</dbReference>
<dbReference type="PDB" id="7ZWZ">
    <property type="method" value="X-ray"/>
    <property type="resolution" value="1.40 A"/>
    <property type="chains" value="A=5-129"/>
</dbReference>
<dbReference type="PDB" id="8AS9">
    <property type="method" value="X-ray"/>
    <property type="resolution" value="3.40 A"/>
    <property type="chains" value="A/B=6-129"/>
</dbReference>
<dbReference type="PDB" id="8C78">
    <property type="method" value="X-ray"/>
    <property type="resolution" value="1.80 A"/>
    <property type="chains" value="A=5-129"/>
</dbReference>
<dbReference type="PDBsum" id="1R28"/>
<dbReference type="PDBsum" id="1R29"/>
<dbReference type="PDBsum" id="1R2B"/>
<dbReference type="PDBsum" id="2EN2"/>
<dbReference type="PDBsum" id="2EOS"/>
<dbReference type="PDBsum" id="2LCE"/>
<dbReference type="PDBsum" id="2YRM"/>
<dbReference type="PDBsum" id="3BIM"/>
<dbReference type="PDBsum" id="3E4U"/>
<dbReference type="PDBsum" id="3LBZ"/>
<dbReference type="PDBsum" id="4CP3"/>
<dbReference type="PDBsum" id="4U2M"/>
<dbReference type="PDBsum" id="5H7G"/>
<dbReference type="PDBsum" id="5H7H"/>
<dbReference type="PDBsum" id="5MW2"/>
<dbReference type="PDBsum" id="5MW6"/>
<dbReference type="PDBsum" id="5MWD"/>
<dbReference type="PDBsum" id="5N1X"/>
<dbReference type="PDBsum" id="5N1Z"/>
<dbReference type="PDBsum" id="5N20"/>
<dbReference type="PDBsum" id="5N21"/>
<dbReference type="PDBsum" id="5X4M"/>
<dbReference type="PDBsum" id="5X4N"/>
<dbReference type="PDBsum" id="5X4O"/>
<dbReference type="PDBsum" id="5X4P"/>
<dbReference type="PDBsum" id="5X4Q"/>
<dbReference type="PDBsum" id="5X9O"/>
<dbReference type="PDBsum" id="5X9P"/>
<dbReference type="PDBsum" id="6C3L"/>
<dbReference type="PDBsum" id="6C3N"/>
<dbReference type="PDBsum" id="6CQ1"/>
<dbReference type="PDBsum" id="6EW6"/>
<dbReference type="PDBsum" id="6EW7"/>
<dbReference type="PDBsum" id="6EW8"/>
<dbReference type="PDBsum" id="6TBT"/>
<dbReference type="PDBsum" id="6TCJ"/>
<dbReference type="PDBsum" id="6TOF"/>
<dbReference type="PDBsum" id="6TOG"/>
<dbReference type="PDBsum" id="6TOH"/>
<dbReference type="PDBsum" id="6TOI"/>
<dbReference type="PDBsum" id="6TOJ"/>
<dbReference type="PDBsum" id="6TOK"/>
<dbReference type="PDBsum" id="6TOL"/>
<dbReference type="PDBsum" id="6TOM"/>
<dbReference type="PDBsum" id="6TON"/>
<dbReference type="PDBsum" id="6TOO"/>
<dbReference type="PDBsum" id="6XMX"/>
<dbReference type="PDBsum" id="6XWF"/>
<dbReference type="PDBsum" id="6XXS"/>
<dbReference type="PDBsum" id="6XYX"/>
<dbReference type="PDBsum" id="6XZZ"/>
<dbReference type="PDBsum" id="6Y17"/>
<dbReference type="PDBsum" id="6ZBU"/>
<dbReference type="PDBsum" id="7BDE"/>
<dbReference type="PDBsum" id="7GUD"/>
<dbReference type="PDBsum" id="7GUE"/>
<dbReference type="PDBsum" id="7GUF"/>
<dbReference type="PDBsum" id="7GUG"/>
<dbReference type="PDBsum" id="7GUH"/>
<dbReference type="PDBsum" id="7GUI"/>
<dbReference type="PDBsum" id="7GUJ"/>
<dbReference type="PDBsum" id="7GUK"/>
<dbReference type="PDBsum" id="7GUL"/>
<dbReference type="PDBsum" id="7GUM"/>
<dbReference type="PDBsum" id="7GUN"/>
<dbReference type="PDBsum" id="7GUO"/>
<dbReference type="PDBsum" id="7GUP"/>
<dbReference type="PDBsum" id="7GUQ"/>
<dbReference type="PDBsum" id="7GUR"/>
<dbReference type="PDBsum" id="7GUS"/>
<dbReference type="PDBsum" id="7GUT"/>
<dbReference type="PDBsum" id="7GUU"/>
<dbReference type="PDBsum" id="7GUV"/>
<dbReference type="PDBsum" id="7GUW"/>
<dbReference type="PDBsum" id="7GUX"/>
<dbReference type="PDBsum" id="7GUY"/>
<dbReference type="PDBsum" id="7GUZ"/>
<dbReference type="PDBsum" id="7GV0"/>
<dbReference type="PDBsum" id="7GV1"/>
<dbReference type="PDBsum" id="7GV2"/>
<dbReference type="PDBsum" id="7GV3"/>
<dbReference type="PDBsum" id="7GV4"/>
<dbReference type="PDBsum" id="7GV5"/>
<dbReference type="PDBsum" id="7GV6"/>
<dbReference type="PDBsum" id="7GV7"/>
<dbReference type="PDBsum" id="7GV8"/>
<dbReference type="PDBsum" id="7GV9"/>
<dbReference type="PDBsum" id="7GVA"/>
<dbReference type="PDBsum" id="7GVB"/>
<dbReference type="PDBsum" id="7GVC"/>
<dbReference type="PDBsum" id="7GVD"/>
<dbReference type="PDBsum" id="7GVE"/>
<dbReference type="PDBsum" id="7GVF"/>
<dbReference type="PDBsum" id="7GVG"/>
<dbReference type="PDBsum" id="7GVH"/>
<dbReference type="PDBsum" id="7GVI"/>
<dbReference type="PDBsum" id="7GVJ"/>
<dbReference type="PDBsum" id="7GVK"/>
<dbReference type="PDBsum" id="7GVL"/>
<dbReference type="PDBsum" id="7GVM"/>
<dbReference type="PDBsum" id="7GVN"/>
<dbReference type="PDBsum" id="7GVO"/>
<dbReference type="PDBsum" id="7GVP"/>
<dbReference type="PDBsum" id="7GVQ"/>
<dbReference type="PDBsum" id="7GVR"/>
<dbReference type="PDBsum" id="7GVS"/>
<dbReference type="PDBsum" id="7GVT"/>
<dbReference type="PDBsum" id="7GVU"/>
<dbReference type="PDBsum" id="7GVV"/>
<dbReference type="PDBsum" id="7GVW"/>
<dbReference type="PDBsum" id="7GVX"/>
<dbReference type="PDBsum" id="7GVY"/>
<dbReference type="PDBsum" id="7GVZ"/>
<dbReference type="PDBsum" id="7GW0"/>
<dbReference type="PDBsum" id="7GW1"/>
<dbReference type="PDBsum" id="7GW2"/>
<dbReference type="PDBsum" id="7GW3"/>
<dbReference type="PDBsum" id="7GW4"/>
<dbReference type="PDBsum" id="7GW5"/>
<dbReference type="PDBsum" id="7GW6"/>
<dbReference type="PDBsum" id="7GW7"/>
<dbReference type="PDBsum" id="7GW8"/>
<dbReference type="PDBsum" id="7GW9"/>
<dbReference type="PDBsum" id="7GWA"/>
<dbReference type="PDBsum" id="7GWB"/>
<dbReference type="PDBsum" id="7GWC"/>
<dbReference type="PDBsum" id="7GWD"/>
<dbReference type="PDBsum" id="7GWE"/>
<dbReference type="PDBsum" id="7GWF"/>
<dbReference type="PDBsum" id="7GWG"/>
<dbReference type="PDBsum" id="7GWH"/>
<dbReference type="PDBsum" id="7GWI"/>
<dbReference type="PDBsum" id="7GWJ"/>
<dbReference type="PDBsum" id="7GWK"/>
<dbReference type="PDBsum" id="7GWL"/>
<dbReference type="PDBsum" id="7GWM"/>
<dbReference type="PDBsum" id="7GWN"/>
<dbReference type="PDBsum" id="7GWO"/>
<dbReference type="PDBsum" id="7GWP"/>
<dbReference type="PDBsum" id="7GWQ"/>
<dbReference type="PDBsum" id="7GWR"/>
<dbReference type="PDBsum" id="7GWS"/>
<dbReference type="PDBsum" id="7GWT"/>
<dbReference type="PDBsum" id="7GWU"/>
<dbReference type="PDBsum" id="7GWV"/>
<dbReference type="PDBsum" id="7GWW"/>
<dbReference type="PDBsum" id="7GWX"/>
<dbReference type="PDBsum" id="7GWY"/>
<dbReference type="PDBsum" id="7GWZ"/>
<dbReference type="PDBsum" id="7GX0"/>
<dbReference type="PDBsum" id="7GX1"/>
<dbReference type="PDBsum" id="7GX2"/>
<dbReference type="PDBsum" id="7GX3"/>
<dbReference type="PDBsum" id="7GX4"/>
<dbReference type="PDBsum" id="7GX5"/>
<dbReference type="PDBsum" id="7GX6"/>
<dbReference type="PDBsum" id="7GX7"/>
<dbReference type="PDBsum" id="7GX8"/>
<dbReference type="PDBsum" id="7GX9"/>
<dbReference type="PDBsum" id="7GXA"/>
<dbReference type="PDBsum" id="7GXB"/>
<dbReference type="PDBsum" id="7GXC"/>
<dbReference type="PDBsum" id="7GXD"/>
<dbReference type="PDBsum" id="7GXE"/>
<dbReference type="PDBsum" id="7GXF"/>
<dbReference type="PDBsum" id="7GXG"/>
<dbReference type="PDBsum" id="7GXH"/>
<dbReference type="PDBsum" id="7GXI"/>
<dbReference type="PDBsum" id="7GXJ"/>
<dbReference type="PDBsum" id="7GXK"/>
<dbReference type="PDBsum" id="7GXL"/>
<dbReference type="PDBsum" id="7GXM"/>
<dbReference type="PDBsum" id="7GXN"/>
<dbReference type="PDBsum" id="7GXO"/>
<dbReference type="PDBsum" id="7GXP"/>
<dbReference type="PDBsum" id="7GXQ"/>
<dbReference type="PDBsum" id="7GXR"/>
<dbReference type="PDBsum" id="7GXS"/>
<dbReference type="PDBsum" id="7GXT"/>
<dbReference type="PDBsum" id="7GXU"/>
<dbReference type="PDBsum" id="7GXV"/>
<dbReference type="PDBsum" id="7GXW"/>
<dbReference type="PDBsum" id="7GXX"/>
<dbReference type="PDBsum" id="7GXY"/>
<dbReference type="PDBsum" id="7GXZ"/>
<dbReference type="PDBsum" id="7GY0"/>
<dbReference type="PDBsum" id="7GY1"/>
<dbReference type="PDBsum" id="7GY2"/>
<dbReference type="PDBsum" id="7GY3"/>
<dbReference type="PDBsum" id="7LWE"/>
<dbReference type="PDBsum" id="7LWF"/>
<dbReference type="PDBsum" id="7LWG"/>
<dbReference type="PDBsum" id="7LZQ"/>
<dbReference type="PDBsum" id="7LZR"/>
<dbReference type="PDBsum" id="7LZS"/>
<dbReference type="PDBsum" id="7OKD"/>
<dbReference type="PDBsum" id="7OKE"/>
<dbReference type="PDBsum" id="7OKF"/>
<dbReference type="PDBsum" id="7OKG"/>
<dbReference type="PDBsum" id="7OKH"/>
<dbReference type="PDBsum" id="7OKI"/>
<dbReference type="PDBsum" id="7OKJ"/>
<dbReference type="PDBsum" id="7OKK"/>
<dbReference type="PDBsum" id="7OKL"/>
<dbReference type="PDBsum" id="7OKM"/>
<dbReference type="PDBsum" id="7Q7R"/>
<dbReference type="PDBsum" id="7Q7S"/>
<dbReference type="PDBsum" id="7Q7T"/>
<dbReference type="PDBsum" id="7Q7U"/>
<dbReference type="PDBsum" id="7Q7V"/>
<dbReference type="PDBsum" id="7QK0"/>
<dbReference type="PDBsum" id="7RUW"/>
<dbReference type="PDBsum" id="7RUX"/>
<dbReference type="PDBsum" id="7RUY"/>
<dbReference type="PDBsum" id="7RUZ"/>
<dbReference type="PDBsum" id="7RV0"/>
<dbReference type="PDBsum" id="7RV1"/>
<dbReference type="PDBsum" id="7RV2"/>
<dbReference type="PDBsum" id="7RV3"/>
<dbReference type="PDBsum" id="7RV4"/>
<dbReference type="PDBsum" id="7RV5"/>
<dbReference type="PDBsum" id="7RV6"/>
<dbReference type="PDBsum" id="7RV7"/>
<dbReference type="PDBsum" id="7RV8"/>
<dbReference type="PDBsum" id="7RV9"/>
<dbReference type="PDBsum" id="7T0S"/>
<dbReference type="PDBsum" id="7T0T"/>
<dbReference type="PDBsum" id="7T0U"/>
<dbReference type="PDBsum" id="7ZWN"/>
<dbReference type="PDBsum" id="7ZWO"/>
<dbReference type="PDBsum" id="7ZWP"/>
<dbReference type="PDBsum" id="7ZWQ"/>
<dbReference type="PDBsum" id="7ZWR"/>
<dbReference type="PDBsum" id="7ZWS"/>
<dbReference type="PDBsum" id="7ZWT"/>
<dbReference type="PDBsum" id="7ZWU"/>
<dbReference type="PDBsum" id="7ZWV"/>
<dbReference type="PDBsum" id="7ZWW"/>
<dbReference type="PDBsum" id="7ZWX"/>
<dbReference type="PDBsum" id="7ZWY"/>
<dbReference type="PDBsum" id="7ZWZ"/>
<dbReference type="PDBsum" id="8AS9"/>
<dbReference type="PDBsum" id="8C78"/>
<dbReference type="EMDB" id="EMD-22265"/>
<dbReference type="SMR" id="P41182"/>
<dbReference type="BioGRID" id="107076">
    <property type="interactions" value="229"/>
</dbReference>
<dbReference type="CORUM" id="P41182"/>
<dbReference type="DIP" id="DIP-2651N"/>
<dbReference type="FunCoup" id="P41182">
    <property type="interactions" value="2994"/>
</dbReference>
<dbReference type="IntAct" id="P41182">
    <property type="interactions" value="129"/>
</dbReference>
<dbReference type="MINT" id="P41182"/>
<dbReference type="STRING" id="9606.ENSP00000384371"/>
<dbReference type="BindingDB" id="P41182"/>
<dbReference type="ChEMBL" id="CHEMBL4105786"/>
<dbReference type="GuidetoPHARMACOLOGY" id="2957"/>
<dbReference type="iPTMnet" id="P41182"/>
<dbReference type="PhosphoSitePlus" id="P41182"/>
<dbReference type="BioMuta" id="BCL6"/>
<dbReference type="DMDM" id="728952"/>
<dbReference type="jPOST" id="P41182"/>
<dbReference type="MassIVE" id="P41182"/>
<dbReference type="PaxDb" id="9606-ENSP00000384371"/>
<dbReference type="PeptideAtlas" id="P41182"/>
<dbReference type="ProteomicsDB" id="55413">
    <molecule id="P41182-1"/>
</dbReference>
<dbReference type="ProteomicsDB" id="55414">
    <molecule id="P41182-2"/>
</dbReference>
<dbReference type="TopDownProteomics" id="P41182-2">
    <molecule id="P41182-2"/>
</dbReference>
<dbReference type="Antibodypedia" id="1434">
    <property type="antibodies" value="1245 antibodies from 51 providers"/>
</dbReference>
<dbReference type="DNASU" id="604"/>
<dbReference type="Ensembl" id="ENST00000232014.8">
    <molecule id="P41182-1"/>
    <property type="protein sequence ID" value="ENSP00000232014.4"/>
    <property type="gene ID" value="ENSG00000113916.18"/>
</dbReference>
<dbReference type="Ensembl" id="ENST00000406870.7">
    <molecule id="P41182-1"/>
    <property type="protein sequence ID" value="ENSP00000384371.2"/>
    <property type="gene ID" value="ENSG00000113916.18"/>
</dbReference>
<dbReference type="Ensembl" id="ENST00000450123.6">
    <molecule id="P41182-2"/>
    <property type="protein sequence ID" value="ENSP00000413122.2"/>
    <property type="gene ID" value="ENSG00000113916.18"/>
</dbReference>
<dbReference type="Ensembl" id="ENST00000621333.4">
    <molecule id="P41182-2"/>
    <property type="protein sequence ID" value="ENSP00000479784.1"/>
    <property type="gene ID" value="ENSG00000113916.18"/>
</dbReference>
<dbReference type="GeneID" id="604"/>
<dbReference type="KEGG" id="hsa:604"/>
<dbReference type="MANE-Select" id="ENST00000406870.7">
    <property type="protein sequence ID" value="ENSP00000384371.2"/>
    <property type="RefSeq nucleotide sequence ID" value="NM_001706.5"/>
    <property type="RefSeq protein sequence ID" value="NP_001697.2"/>
</dbReference>
<dbReference type="UCSC" id="uc003frp.4">
    <molecule id="P41182-1"/>
    <property type="organism name" value="human"/>
</dbReference>
<dbReference type="AGR" id="HGNC:1001"/>
<dbReference type="CTD" id="604"/>
<dbReference type="DisGeNET" id="604"/>
<dbReference type="GeneCards" id="BCL6"/>
<dbReference type="HGNC" id="HGNC:1001">
    <property type="gene designation" value="BCL6"/>
</dbReference>
<dbReference type="HPA" id="ENSG00000113916">
    <property type="expression patterns" value="Tissue enhanced (skeletal)"/>
</dbReference>
<dbReference type="MalaCards" id="BCL6"/>
<dbReference type="MIM" id="109565">
    <property type="type" value="gene"/>
</dbReference>
<dbReference type="neXtProt" id="NX_P41182"/>
<dbReference type="OpenTargets" id="ENSG00000113916"/>
<dbReference type="Orphanet" id="545">
    <property type="disease" value="Follicular lymphoma"/>
</dbReference>
<dbReference type="Orphanet" id="480541">
    <property type="disease" value="High grade B-cell lymphoma with MYC and/ or BCL2 and/or BCL6 rearrangement"/>
</dbReference>
<dbReference type="Orphanet" id="98839">
    <property type="disease" value="Intravascular large B-cell lymphoma"/>
</dbReference>
<dbReference type="Orphanet" id="98838">
    <property type="disease" value="Primary mediastinal large B-cell lymphoma"/>
</dbReference>
<dbReference type="PharmGKB" id="PA25312"/>
<dbReference type="VEuPathDB" id="HostDB:ENSG00000113916"/>
<dbReference type="eggNOG" id="KOG1721">
    <property type="taxonomic scope" value="Eukaryota"/>
</dbReference>
<dbReference type="GeneTree" id="ENSGT00940000156311"/>
<dbReference type="HOGENOM" id="CLU_024196_1_0_1"/>
<dbReference type="InParanoid" id="P41182"/>
<dbReference type="OMA" id="DARMPMA"/>
<dbReference type="OrthoDB" id="5560627at2759"/>
<dbReference type="PAN-GO" id="P41182">
    <property type="GO annotations" value="10 GO annotations based on evolutionary models"/>
</dbReference>
<dbReference type="PhylomeDB" id="P41182"/>
<dbReference type="TreeFam" id="TF330912"/>
<dbReference type="PathwayCommons" id="P41182"/>
<dbReference type="Reactome" id="R-HSA-6785807">
    <property type="pathway name" value="Interleukin-4 and Interleukin-13 signaling"/>
</dbReference>
<dbReference type="Reactome" id="R-HSA-6803205">
    <property type="pathway name" value="TP53 regulates transcription of several additional cell death genes whose specific roles in p53-dependent apoptosis remain uncertain"/>
</dbReference>
<dbReference type="Reactome" id="R-HSA-9614657">
    <property type="pathway name" value="FOXO-mediated transcription of cell death genes"/>
</dbReference>
<dbReference type="SignaLink" id="P41182"/>
<dbReference type="SIGNOR" id="P41182"/>
<dbReference type="BioGRID-ORCS" id="604">
    <property type="hits" value="47 hits in 1225 CRISPR screens"/>
</dbReference>
<dbReference type="ChiTaRS" id="BCL6">
    <property type="organism name" value="human"/>
</dbReference>
<dbReference type="EvolutionaryTrace" id="P41182"/>
<dbReference type="GeneWiki" id="BCL6"/>
<dbReference type="GenomeRNAi" id="604"/>
<dbReference type="Pharos" id="P41182">
    <property type="development level" value="Tchem"/>
</dbReference>
<dbReference type="PRO" id="PR:P41182"/>
<dbReference type="Proteomes" id="UP000005640">
    <property type="component" value="Chromosome 3"/>
</dbReference>
<dbReference type="RNAct" id="P41182">
    <property type="molecule type" value="protein"/>
</dbReference>
<dbReference type="Bgee" id="ENSG00000113916">
    <property type="expression patterns" value="Expressed in gastrocnemius and 211 other cell types or tissues"/>
</dbReference>
<dbReference type="ExpressionAtlas" id="P41182">
    <property type="expression patterns" value="baseline and differential"/>
</dbReference>
<dbReference type="GO" id="GO:0005794">
    <property type="term" value="C:Golgi apparatus"/>
    <property type="evidence" value="ECO:0000314"/>
    <property type="project" value="HPA"/>
</dbReference>
<dbReference type="GO" id="GO:0005730">
    <property type="term" value="C:nucleolus"/>
    <property type="evidence" value="ECO:0000314"/>
    <property type="project" value="HPA"/>
</dbReference>
<dbReference type="GO" id="GO:0005654">
    <property type="term" value="C:nucleoplasm"/>
    <property type="evidence" value="ECO:0000314"/>
    <property type="project" value="HPA"/>
</dbReference>
<dbReference type="GO" id="GO:0005634">
    <property type="term" value="C:nucleus"/>
    <property type="evidence" value="ECO:0000314"/>
    <property type="project" value="UniProtKB"/>
</dbReference>
<dbReference type="GO" id="GO:0042382">
    <property type="term" value="C:paraspeckles"/>
    <property type="evidence" value="ECO:0000314"/>
    <property type="project" value="UniProtKB"/>
</dbReference>
<dbReference type="GO" id="GO:0003682">
    <property type="term" value="F:chromatin binding"/>
    <property type="evidence" value="ECO:0000314"/>
    <property type="project" value="MGI"/>
</dbReference>
<dbReference type="GO" id="GO:0031490">
    <property type="term" value="F:chromatin DNA binding"/>
    <property type="evidence" value="ECO:0007669"/>
    <property type="project" value="Ensembl"/>
</dbReference>
<dbReference type="GO" id="GO:0003700">
    <property type="term" value="F:DNA-binding transcription factor activity"/>
    <property type="evidence" value="ECO:0000315"/>
    <property type="project" value="UniProtKB"/>
</dbReference>
<dbReference type="GO" id="GO:0140297">
    <property type="term" value="F:DNA-binding transcription factor binding"/>
    <property type="evidence" value="ECO:0000353"/>
    <property type="project" value="UniProtKB"/>
</dbReference>
<dbReference type="GO" id="GO:0001227">
    <property type="term" value="F:DNA-binding transcription repressor activity, RNA polymerase II-specific"/>
    <property type="evidence" value="ECO:0000314"/>
    <property type="project" value="UniProtKB"/>
</dbReference>
<dbReference type="GO" id="GO:0042802">
    <property type="term" value="F:identical protein binding"/>
    <property type="evidence" value="ECO:0000353"/>
    <property type="project" value="IntAct"/>
</dbReference>
<dbReference type="GO" id="GO:0001161">
    <property type="term" value="F:intronic transcription regulatory region sequence-specific DNA binding"/>
    <property type="evidence" value="ECO:0007669"/>
    <property type="project" value="Ensembl"/>
</dbReference>
<dbReference type="GO" id="GO:0000978">
    <property type="term" value="F:RNA polymerase II cis-regulatory region sequence-specific DNA binding"/>
    <property type="evidence" value="ECO:0000318"/>
    <property type="project" value="GO_Central"/>
</dbReference>
<dbReference type="GO" id="GO:0043565">
    <property type="term" value="F:sequence-specific DNA binding"/>
    <property type="evidence" value="ECO:0000314"/>
    <property type="project" value="UniProtKB"/>
</dbReference>
<dbReference type="GO" id="GO:1990837">
    <property type="term" value="F:sequence-specific double-stranded DNA binding"/>
    <property type="evidence" value="ECO:0000314"/>
    <property type="project" value="ARUK-UCL"/>
</dbReference>
<dbReference type="GO" id="GO:0001222">
    <property type="term" value="F:transcription corepressor binding"/>
    <property type="evidence" value="ECO:0000353"/>
    <property type="project" value="UniProtKB"/>
</dbReference>
<dbReference type="GO" id="GO:0008270">
    <property type="term" value="F:zinc ion binding"/>
    <property type="evidence" value="ECO:0007669"/>
    <property type="project" value="UniProtKB-KW"/>
</dbReference>
<dbReference type="GO" id="GO:0030036">
    <property type="term" value="P:actin cytoskeleton organization"/>
    <property type="evidence" value="ECO:0007669"/>
    <property type="project" value="Ensembl"/>
</dbReference>
<dbReference type="GO" id="GO:0042100">
    <property type="term" value="P:B cell proliferation"/>
    <property type="evidence" value="ECO:0007669"/>
    <property type="project" value="Ensembl"/>
</dbReference>
<dbReference type="GO" id="GO:0000902">
    <property type="term" value="P:cell morphogenesis"/>
    <property type="evidence" value="ECO:0007669"/>
    <property type="project" value="Ensembl"/>
</dbReference>
<dbReference type="GO" id="GO:0048870">
    <property type="term" value="P:cell motility"/>
    <property type="evidence" value="ECO:0007669"/>
    <property type="project" value="Ensembl"/>
</dbReference>
<dbReference type="GO" id="GO:0007160">
    <property type="term" value="P:cell-matrix adhesion"/>
    <property type="evidence" value="ECO:0007669"/>
    <property type="project" value="Ensembl"/>
</dbReference>
<dbReference type="GO" id="GO:0006974">
    <property type="term" value="P:DNA damage response"/>
    <property type="evidence" value="ECO:0000314"/>
    <property type="project" value="UniProtKB"/>
</dbReference>
<dbReference type="GO" id="GO:0048821">
    <property type="term" value="P:erythrocyte development"/>
    <property type="evidence" value="ECO:0007669"/>
    <property type="project" value="Ensembl"/>
</dbReference>
<dbReference type="GO" id="GO:0002467">
    <property type="term" value="P:germinal center formation"/>
    <property type="evidence" value="ECO:0007669"/>
    <property type="project" value="Ensembl"/>
</dbReference>
<dbReference type="GO" id="GO:0031507">
    <property type="term" value="P:heterochromatin formation"/>
    <property type="evidence" value="ECO:0007669"/>
    <property type="project" value="Ensembl"/>
</dbReference>
<dbReference type="GO" id="GO:0006954">
    <property type="term" value="P:inflammatory response"/>
    <property type="evidence" value="ECO:0007669"/>
    <property type="project" value="UniProtKB-KW"/>
</dbReference>
<dbReference type="GO" id="GO:0048289">
    <property type="term" value="P:isotype switching to IgE isotypes"/>
    <property type="evidence" value="ECO:0007669"/>
    <property type="project" value="Ensembl"/>
</dbReference>
<dbReference type="GO" id="GO:0002903">
    <property type="term" value="P:negative regulation of B cell apoptotic process"/>
    <property type="evidence" value="ECO:0000303"/>
    <property type="project" value="UniProtKB"/>
</dbReference>
<dbReference type="GO" id="GO:0030308">
    <property type="term" value="P:negative regulation of cell growth"/>
    <property type="evidence" value="ECO:0000314"/>
    <property type="project" value="UniProtKB"/>
</dbReference>
<dbReference type="GO" id="GO:0001953">
    <property type="term" value="P:negative regulation of cell-matrix adhesion"/>
    <property type="evidence" value="ECO:0007669"/>
    <property type="project" value="Ensembl"/>
</dbReference>
<dbReference type="GO" id="GO:2000773">
    <property type="term" value="P:negative regulation of cellular senescence"/>
    <property type="evidence" value="ECO:0007669"/>
    <property type="project" value="Ensembl"/>
</dbReference>
<dbReference type="GO" id="GO:0045892">
    <property type="term" value="P:negative regulation of DNA-templated transcription"/>
    <property type="evidence" value="ECO:0000315"/>
    <property type="project" value="UniProtKB"/>
</dbReference>
<dbReference type="GO" id="GO:0048294">
    <property type="term" value="P:negative regulation of isotype switching to IgE isotypes"/>
    <property type="evidence" value="ECO:0007669"/>
    <property type="project" value="Ensembl"/>
</dbReference>
<dbReference type="GO" id="GO:0032764">
    <property type="term" value="P:negative regulation of mast cell cytokine production"/>
    <property type="evidence" value="ECO:0007669"/>
    <property type="project" value="Ensembl"/>
</dbReference>
<dbReference type="GO" id="GO:1903464">
    <property type="term" value="P:negative regulation of mitotic cell cycle DNA replication"/>
    <property type="evidence" value="ECO:0000303"/>
    <property type="project" value="UniProtKB"/>
</dbReference>
<dbReference type="GO" id="GO:0032945">
    <property type="term" value="P:negative regulation of mononuclear cell proliferation"/>
    <property type="evidence" value="ECO:0007669"/>
    <property type="project" value="Ensembl"/>
</dbReference>
<dbReference type="GO" id="GO:0045746">
    <property type="term" value="P:negative regulation of Notch signaling pathway"/>
    <property type="evidence" value="ECO:0007669"/>
    <property type="project" value="Ensembl"/>
</dbReference>
<dbReference type="GO" id="GO:1900099">
    <property type="term" value="P:negative regulation of plasma cell differentiation"/>
    <property type="evidence" value="ECO:0007669"/>
    <property type="project" value="Ensembl"/>
</dbReference>
<dbReference type="GO" id="GO:0035024">
    <property type="term" value="P:negative regulation of Rho protein signal transduction"/>
    <property type="evidence" value="ECO:0007669"/>
    <property type="project" value="Ensembl"/>
</dbReference>
<dbReference type="GO" id="GO:0045629">
    <property type="term" value="P:negative regulation of T-helper 2 cell differentiation"/>
    <property type="evidence" value="ECO:0007669"/>
    <property type="project" value="Ensembl"/>
</dbReference>
<dbReference type="GO" id="GO:0000122">
    <property type="term" value="P:negative regulation of transcription by RNA polymerase II"/>
    <property type="evidence" value="ECO:0000314"/>
    <property type="project" value="UniProtKB"/>
</dbReference>
<dbReference type="GO" id="GO:0002317">
    <property type="term" value="P:plasma cell differentiation"/>
    <property type="evidence" value="ECO:0007669"/>
    <property type="project" value="Ensembl"/>
</dbReference>
<dbReference type="GO" id="GO:0043065">
    <property type="term" value="P:positive regulation of apoptotic process"/>
    <property type="evidence" value="ECO:0000314"/>
    <property type="project" value="UniProtKB"/>
</dbReference>
<dbReference type="GO" id="GO:0030890">
    <property type="term" value="P:positive regulation of B cell proliferation"/>
    <property type="evidence" value="ECO:0007669"/>
    <property type="project" value="Ensembl"/>
</dbReference>
<dbReference type="GO" id="GO:2000147">
    <property type="term" value="P:positive regulation of cell motility"/>
    <property type="evidence" value="ECO:0007669"/>
    <property type="project" value="Ensembl"/>
</dbReference>
<dbReference type="GO" id="GO:0045666">
    <property type="term" value="P:positive regulation of neuron differentiation"/>
    <property type="evidence" value="ECO:0007669"/>
    <property type="project" value="Ensembl"/>
</dbReference>
<dbReference type="GO" id="GO:0045591">
    <property type="term" value="P:positive regulation of regulatory T cell differentiation"/>
    <property type="evidence" value="ECO:0000315"/>
    <property type="project" value="ARUK-UCL"/>
</dbReference>
<dbReference type="GO" id="GO:0008104">
    <property type="term" value="P:protein localization"/>
    <property type="evidence" value="ECO:0007669"/>
    <property type="project" value="Ensembl"/>
</dbReference>
<dbReference type="GO" id="GO:0021859">
    <property type="term" value="P:pyramidal neuron differentiation"/>
    <property type="evidence" value="ECO:0007669"/>
    <property type="project" value="Ensembl"/>
</dbReference>
<dbReference type="GO" id="GO:0045595">
    <property type="term" value="P:regulation of cell differentiation"/>
    <property type="evidence" value="ECO:0000318"/>
    <property type="project" value="GO_Central"/>
</dbReference>
<dbReference type="GO" id="GO:0042127">
    <property type="term" value="P:regulation of cell population proliferation"/>
    <property type="evidence" value="ECO:0000318"/>
    <property type="project" value="GO_Central"/>
</dbReference>
<dbReference type="GO" id="GO:0001817">
    <property type="term" value="P:regulation of cytokine production"/>
    <property type="evidence" value="ECO:0000318"/>
    <property type="project" value="GO_Central"/>
</dbReference>
<dbReference type="GO" id="GO:0002634">
    <property type="term" value="P:regulation of germinal center formation"/>
    <property type="evidence" value="ECO:0000303"/>
    <property type="project" value="UniProtKB"/>
</dbReference>
<dbReference type="GO" id="GO:0050776">
    <property type="term" value="P:regulation of immune response"/>
    <property type="evidence" value="ECO:0000303"/>
    <property type="project" value="UniProtKB"/>
</dbReference>
<dbReference type="GO" id="GO:0002682">
    <property type="term" value="P:regulation of immune system process"/>
    <property type="evidence" value="ECO:0000318"/>
    <property type="project" value="GO_Central"/>
</dbReference>
<dbReference type="GO" id="GO:0050727">
    <property type="term" value="P:regulation of inflammatory response"/>
    <property type="evidence" value="ECO:0000318"/>
    <property type="project" value="GO_Central"/>
</dbReference>
<dbReference type="GO" id="GO:0043380">
    <property type="term" value="P:regulation of memory T cell differentiation"/>
    <property type="evidence" value="ECO:0007669"/>
    <property type="project" value="Ensembl"/>
</dbReference>
<dbReference type="GO" id="GO:0042129">
    <property type="term" value="P:regulation of T cell proliferation"/>
    <property type="evidence" value="ECO:0007669"/>
    <property type="project" value="Ensembl"/>
</dbReference>
<dbReference type="GO" id="GO:0007266">
    <property type="term" value="P:Rho protein signal transduction"/>
    <property type="evidence" value="ECO:0007669"/>
    <property type="project" value="Ensembl"/>
</dbReference>
<dbReference type="GO" id="GO:0007283">
    <property type="term" value="P:spermatogenesis"/>
    <property type="evidence" value="ECO:0007669"/>
    <property type="project" value="Ensembl"/>
</dbReference>
<dbReference type="GO" id="GO:0045064">
    <property type="term" value="P:T-helper 2 cell differentiation"/>
    <property type="evidence" value="ECO:0007669"/>
    <property type="project" value="Ensembl"/>
</dbReference>
<dbReference type="GO" id="GO:0006366">
    <property type="term" value="P:transcription by RNA polymerase II"/>
    <property type="evidence" value="ECO:0007669"/>
    <property type="project" value="Ensembl"/>
</dbReference>
<dbReference type="GO" id="GO:0042092">
    <property type="term" value="P:type 2 immune response"/>
    <property type="evidence" value="ECO:0000318"/>
    <property type="project" value="GO_Central"/>
</dbReference>
<dbReference type="CDD" id="cd18331">
    <property type="entry name" value="BTB_POZ_ZBTB27_BCL6"/>
    <property type="match status" value="1"/>
</dbReference>
<dbReference type="FunFam" id="3.30.160.60:FF:000105">
    <property type="entry name" value="B-cell CLL/lymphoma 6, member B"/>
    <property type="match status" value="2"/>
</dbReference>
<dbReference type="FunFam" id="3.30.160.60:FF:000289">
    <property type="entry name" value="B-cell CLL/lymphoma 6, member B"/>
    <property type="match status" value="1"/>
</dbReference>
<dbReference type="FunFam" id="3.30.160.60:FF:000457">
    <property type="entry name" value="B-cell lymphoma 6 protein-like"/>
    <property type="match status" value="1"/>
</dbReference>
<dbReference type="FunFam" id="3.30.160.60:FF:000468">
    <property type="entry name" value="B-cell lymphoma 6 protein-like"/>
    <property type="match status" value="1"/>
</dbReference>
<dbReference type="FunFam" id="3.30.710.10:FF:000025">
    <property type="entry name" value="B-cell lymphoma 6 protein-like"/>
    <property type="match status" value="1"/>
</dbReference>
<dbReference type="FunFam" id="3.30.160.60:FF:001790">
    <property type="entry name" value="BCL6A, transcription repressor a"/>
    <property type="match status" value="1"/>
</dbReference>
<dbReference type="Gene3D" id="3.30.160.60">
    <property type="entry name" value="Classic Zinc Finger"/>
    <property type="match status" value="6"/>
</dbReference>
<dbReference type="Gene3D" id="3.30.710.10">
    <property type="entry name" value="Potassium Channel Kv1.1, Chain A"/>
    <property type="match status" value="1"/>
</dbReference>
<dbReference type="IDEAL" id="IID00372"/>
<dbReference type="InterPro" id="IPR000210">
    <property type="entry name" value="BTB/POZ_dom"/>
</dbReference>
<dbReference type="InterPro" id="IPR011333">
    <property type="entry name" value="SKP1/BTB/POZ_sf"/>
</dbReference>
<dbReference type="InterPro" id="IPR036236">
    <property type="entry name" value="Znf_C2H2_sf"/>
</dbReference>
<dbReference type="InterPro" id="IPR013087">
    <property type="entry name" value="Znf_C2H2_type"/>
</dbReference>
<dbReference type="PANTHER" id="PTHR24394:SF36">
    <property type="entry name" value="B-CELL LYMPHOMA 6 PROTEIN ISOFORM X1"/>
    <property type="match status" value="1"/>
</dbReference>
<dbReference type="PANTHER" id="PTHR24394">
    <property type="entry name" value="ZINC FINGER PROTEIN"/>
    <property type="match status" value="1"/>
</dbReference>
<dbReference type="Pfam" id="PF00651">
    <property type="entry name" value="BTB"/>
    <property type="match status" value="1"/>
</dbReference>
<dbReference type="Pfam" id="PF00096">
    <property type="entry name" value="zf-C2H2"/>
    <property type="match status" value="4"/>
</dbReference>
<dbReference type="SMART" id="SM00225">
    <property type="entry name" value="BTB"/>
    <property type="match status" value="1"/>
</dbReference>
<dbReference type="SMART" id="SM00355">
    <property type="entry name" value="ZnF_C2H2"/>
    <property type="match status" value="6"/>
</dbReference>
<dbReference type="SUPFAM" id="SSF57667">
    <property type="entry name" value="beta-beta-alpha zinc fingers"/>
    <property type="match status" value="3"/>
</dbReference>
<dbReference type="SUPFAM" id="SSF54695">
    <property type="entry name" value="POZ domain"/>
    <property type="match status" value="1"/>
</dbReference>
<dbReference type="PROSITE" id="PS50097">
    <property type="entry name" value="BTB"/>
    <property type="match status" value="1"/>
</dbReference>
<dbReference type="PROSITE" id="PS00028">
    <property type="entry name" value="ZINC_FINGER_C2H2_1"/>
    <property type="match status" value="6"/>
</dbReference>
<dbReference type="PROSITE" id="PS50157">
    <property type="entry name" value="ZINC_FINGER_C2H2_2"/>
    <property type="match status" value="6"/>
</dbReference>
<feature type="chain" id="PRO_0000047098" description="B-cell lymphoma 6 protein">
    <location>
        <begin position="1"/>
        <end position="706"/>
    </location>
</feature>
<feature type="domain" description="BTB" evidence="3">
    <location>
        <begin position="32"/>
        <end position="99"/>
    </location>
</feature>
<feature type="zinc finger region" description="C2H2-type 1" evidence="4">
    <location>
        <begin position="518"/>
        <end position="541"/>
    </location>
</feature>
<feature type="zinc finger region" description="C2H2-type 2" evidence="4">
    <location>
        <begin position="546"/>
        <end position="568"/>
    </location>
</feature>
<feature type="zinc finger region" description="C2H2-type 3" evidence="4">
    <location>
        <begin position="574"/>
        <end position="596"/>
    </location>
</feature>
<feature type="zinc finger region" description="C2H2-type 4" evidence="4">
    <location>
        <begin position="602"/>
        <end position="624"/>
    </location>
</feature>
<feature type="zinc finger region" description="C2H2-type 5" evidence="4">
    <location>
        <begin position="630"/>
        <end position="652"/>
    </location>
</feature>
<feature type="zinc finger region" description="C2H2-type 6" evidence="4">
    <location>
        <begin position="658"/>
        <end position="681"/>
    </location>
</feature>
<feature type="region of interest" description="Disordered" evidence="5">
    <location>
        <begin position="317"/>
        <end position="349"/>
    </location>
</feature>
<feature type="region of interest" description="Required for interaction with NuRD complex and for transcriptional repressor activity">
    <location>
        <begin position="376"/>
        <end position="379"/>
    </location>
</feature>
<feature type="region of interest" description="Disordered" evidence="5">
    <location>
        <begin position="407"/>
        <end position="467"/>
    </location>
</feature>
<feature type="compositionally biased region" description="Polar residues" evidence="5">
    <location>
        <begin position="330"/>
        <end position="349"/>
    </location>
</feature>
<feature type="compositionally biased region" description="Polar residues" evidence="5">
    <location>
        <begin position="424"/>
        <end position="456"/>
    </location>
</feature>
<feature type="compositionally biased region" description="Low complexity" evidence="5">
    <location>
        <begin position="457"/>
        <end position="466"/>
    </location>
</feature>
<feature type="modified residue" description="Phosphoserine; by MAPK1" evidence="27 30">
    <location>
        <position position="333"/>
    </location>
</feature>
<feature type="modified residue" description="Phosphoserine; by MAPK1" evidence="27">
    <location>
        <position position="343"/>
    </location>
</feature>
<feature type="modified residue" description="Phosphoserine" evidence="2">
    <location>
        <position position="361"/>
    </location>
</feature>
<feature type="modified residue" description="N6-acetyllysine" evidence="10">
    <location>
        <position position="379"/>
    </location>
</feature>
<feature type="modified residue" description="Phosphoserine" evidence="2">
    <location>
        <position position="404"/>
    </location>
</feature>
<feature type="splice variant" id="VSP_042709" description="In isoform 2." evidence="28">
    <location>
        <begin position="514"/>
        <end position="569"/>
    </location>
</feature>
<feature type="sequence variant" id="VAR_052709" description="In dbSNP:rs34463990.">
    <original>N</original>
    <variation>S</variation>
    <location>
        <position position="252"/>
    </location>
</feature>
<feature type="sequence variant" id="VAR_019970" description="In dbSNP:rs2229362.">
    <original>A</original>
    <variation>T</variation>
    <location>
        <position position="493"/>
    </location>
</feature>
<feature type="sequence variant" id="VAR_014825" description="In dbSNP:rs1056936.">
    <original>H</original>
    <variation>Y</variation>
    <location>
        <position position="676"/>
    </location>
</feature>
<feature type="mutagenesis site" description="Abolishes interaction with NCOR2 and HDAC2, no effect on interaction with CTBP1 and transcriptional autoinhibition; when associated with A-116 and 376-Q--Q-379." evidence="20">
    <original>N</original>
    <variation>K</variation>
    <location>
        <position position="21"/>
    </location>
</feature>
<feature type="mutagenesis site" description="Abolished ubiquitination by the SCF(FBXL17) complex." evidence="26">
    <original>S</original>
    <variation>A</variation>
    <location>
        <position position="59"/>
    </location>
</feature>
<feature type="mutagenesis site" description="Abolishes interaction with NCOR2 and HDAC2, no effect on interaction with CTBP1 and transcriptional autoinhibition; when associated with K-21 and 376-Q--Q-379." evidence="20">
    <original>H</original>
    <variation>A</variation>
    <location>
        <position position="116"/>
    </location>
</feature>
<feature type="mutagenesis site" description="No effect on interaction with PIN1." evidence="19">
    <original>T</original>
    <variation>A</variation>
    <location>
        <position position="190"/>
    </location>
</feature>
<feature type="mutagenesis site" description="No effect on interaction with PIN1." evidence="19">
    <original>S</original>
    <variation>A</variation>
    <location>
        <position position="250"/>
    </location>
</feature>
<feature type="mutagenesis site" description="Strongly reduces interaction with PIN1." evidence="19">
    <original>S</original>
    <variation>A</variation>
    <location>
        <position position="260"/>
    </location>
</feature>
<feature type="mutagenesis site" description="Decrease in phosphorylation by MAPK1." evidence="27">
    <original>S</original>
    <variation>A</variation>
    <location>
        <position position="333"/>
    </location>
</feature>
<feature type="mutagenesis site" description="Decrease in phosphorylation by MAPK1." evidence="27">
    <original>S</original>
    <variation>A</variation>
    <location>
        <position position="343"/>
    </location>
</feature>
<feature type="mutagenesis site" description="Abolishes interaction with HDAC2 and MTA3 as well as transcriptional repressor and transforming activities. Abolishes interaction with NCOR2 and HDAC2, no effect on interaction with CTBP1 and transcriptional autoinhibition; when associated with K-21 and A-116." evidence="15 20">
    <original>KKYK</original>
    <variation>QQYQ</variation>
    <location>
        <begin position="376"/>
        <end position="379"/>
    </location>
</feature>
<feature type="mutagenesis site" description="No effect on acetylation." evidence="10">
    <original>K</original>
    <variation>R</variation>
    <location>
        <position position="376"/>
    </location>
</feature>
<feature type="mutagenesis site" description="No effect on acetylation." evidence="10">
    <original>K</original>
    <variation>R</variation>
    <location>
        <position position="377"/>
    </location>
</feature>
<feature type="mutagenesis site" description="Abolishes acetylation. No effect on interaction with MTA3, NCOR1 and NCOR2." evidence="10 15">
    <original>K</original>
    <variation>R</variation>
    <location>
        <position position="379"/>
    </location>
</feature>
<feature type="mutagenesis site" description="No effect on DNA-binding, nuclear localization, transcriptional repression activity and interaction with HDAC5." evidence="12">
    <original>CNEC</original>
    <variation>GNEG</variation>
    <location>
        <begin position="520"/>
        <end position="523"/>
    </location>
</feature>
<feature type="mutagenesis site" description="No effect on DNA-binding, nuclear localization, transcriptional repression activity and interaction with HDAC5." evidence="12">
    <original>CDRC</original>
    <variation>GDRG</variation>
    <location>
        <begin position="548"/>
        <end position="551"/>
    </location>
</feature>
<feature type="mutagenesis site" description="Abolishes DNA-binding and transcriptional repression activity, no effect on nuclear localization and interaction with HDAC5." evidence="12">
    <original>CNIC</original>
    <variation>GNIG</variation>
    <location>
        <begin position="576"/>
        <end position="579"/>
    </location>
</feature>
<feature type="mutagenesis site" description="Abolishes DNA-binding and transcriptional repression activity, perturbs nuclear localization. No effect on interaction with HDAC5." evidence="12">
    <original>CETC</original>
    <variation>GETG</variation>
    <location>
        <begin position="604"/>
        <end position="607"/>
    </location>
</feature>
<feature type="mutagenesis site" description="Abolishes DNA-binding and transcriptional repression activity, no effect on nuclear localization and interaction with HDAC5." evidence="12">
    <original>CEIC</original>
    <variation>GEIG</variation>
    <location>
        <begin position="632"/>
        <end position="635"/>
    </location>
</feature>
<feature type="mutagenesis site" description="Abolishes DNA-binding and transcriptional repression activity, perturbs nuclear localization. No effect on interaction with HDAC5." evidence="12">
    <original>CEKC</original>
    <variation>GEKG</variation>
    <location>
        <begin position="660"/>
        <end position="663"/>
    </location>
</feature>
<feature type="sequence conflict" description="In Ref. 2; AAC50054." evidence="29" ref="2">
    <original>S</original>
    <variation>A</variation>
    <location>
        <position position="347"/>
    </location>
</feature>
<feature type="sequence conflict" description="In Ref. 2; AAC50054." evidence="29" ref="2">
    <original>E</original>
    <variation>G</variation>
    <location>
        <position position="393"/>
    </location>
</feature>
<feature type="sequence conflict" description="In Ref. 2; AAC50054." evidence="29" ref="2">
    <original>P</original>
    <variation>A</variation>
    <location>
        <position position="498"/>
    </location>
</feature>
<feature type="helix" evidence="37">
    <location>
        <begin position="5"/>
        <end position="7"/>
    </location>
</feature>
<feature type="strand" evidence="36">
    <location>
        <begin position="8"/>
        <end position="10"/>
    </location>
</feature>
<feature type="helix" evidence="37">
    <location>
        <begin position="14"/>
        <end position="27"/>
    </location>
</feature>
<feature type="turn" evidence="35">
    <location>
        <begin position="29"/>
        <end position="31"/>
    </location>
</feature>
<feature type="strand" evidence="37">
    <location>
        <begin position="34"/>
        <end position="38"/>
    </location>
</feature>
<feature type="strand" evidence="37">
    <location>
        <begin position="41"/>
        <end position="45"/>
    </location>
</feature>
<feature type="helix" evidence="37">
    <location>
        <begin position="47"/>
        <end position="53"/>
    </location>
</feature>
<feature type="helix" evidence="37">
    <location>
        <begin position="55"/>
        <end position="62"/>
    </location>
</feature>
<feature type="turn" evidence="37">
    <location>
        <begin position="64"/>
        <end position="68"/>
    </location>
</feature>
<feature type="strand" evidence="37">
    <location>
        <begin position="70"/>
        <end position="73"/>
    </location>
</feature>
<feature type="helix" evidence="37">
    <location>
        <begin position="80"/>
        <end position="92"/>
    </location>
</feature>
<feature type="strand" evidence="38">
    <location>
        <begin position="93"/>
        <end position="95"/>
    </location>
</feature>
<feature type="turn" evidence="37">
    <location>
        <begin position="99"/>
        <end position="101"/>
    </location>
</feature>
<feature type="helix" evidence="37">
    <location>
        <begin position="102"/>
        <end position="112"/>
    </location>
</feature>
<feature type="helix" evidence="37">
    <location>
        <begin position="115"/>
        <end position="127"/>
    </location>
</feature>
<feature type="strand" evidence="34">
    <location>
        <begin position="521"/>
        <end position="523"/>
    </location>
</feature>
<feature type="strand" evidence="34">
    <location>
        <begin position="527"/>
        <end position="529"/>
    </location>
</feature>
<feature type="helix" evidence="34">
    <location>
        <begin position="530"/>
        <end position="540"/>
    </location>
</feature>
<feature type="helix" evidence="33">
    <location>
        <begin position="558"/>
        <end position="568"/>
    </location>
</feature>
<feature type="strand" evidence="33">
    <location>
        <begin position="573"/>
        <end position="575"/>
    </location>
</feature>
<feature type="turn" evidence="33">
    <location>
        <begin position="577"/>
        <end position="579"/>
    </location>
</feature>
<feature type="strand" evidence="33">
    <location>
        <begin position="582"/>
        <end position="584"/>
    </location>
</feature>
<feature type="helix" evidence="33">
    <location>
        <begin position="586"/>
        <end position="596"/>
    </location>
</feature>
<feature type="strand" evidence="31">
    <location>
        <begin position="601"/>
        <end position="603"/>
    </location>
</feature>
<feature type="turn" evidence="31">
    <location>
        <begin position="605"/>
        <end position="607"/>
    </location>
</feature>
<feature type="strand" evidence="31">
    <location>
        <begin position="610"/>
        <end position="613"/>
    </location>
</feature>
<feature type="helix" evidence="31">
    <location>
        <begin position="614"/>
        <end position="620"/>
    </location>
</feature>
<feature type="helix" evidence="31">
    <location>
        <begin position="622"/>
        <end position="625"/>
    </location>
</feature>
<feature type="strand" evidence="32">
    <location>
        <begin position="633"/>
        <end position="635"/>
    </location>
</feature>
<feature type="strand" evidence="32">
    <location>
        <begin position="639"/>
        <end position="641"/>
    </location>
</feature>
<feature type="helix" evidence="32">
    <location>
        <begin position="642"/>
        <end position="648"/>
    </location>
</feature>
<feature type="turn" evidence="32">
    <location>
        <begin position="649"/>
        <end position="652"/>
    </location>
</feature>
<sequence>MASPADSCIQFTRHASDVLLNLNRLRSRDILTDVVIVVSREQFRAHKTVLMACSGLFYSIFTDQLKCNLSVINLDPEINPEGFCILLDFMYTSRLNLREGNIMAVMATAMYLQMEHVVDTCRKFIKASEAEMVSAIKPPREEFLNSRMLMPQDIMAYRGREVVENNLPLRSAPGCESRAFAPSLYSGLSTPPASYSMYSHLPVSSLLFSDEEFRDVRMPVANPFPKERALPCDSARPVPGEYSRPTLEVSPNVCHSNIYSPKETIPEEARSDMHYSVAEGLKPAAPSARNAPYFPCDKASKEEERPSSEDEIALHFEPPNAPLNRKGLVSPQSPQKSDCQPNSPTESCSSKNACILQASGSPPAKSPTDPKACNWKKYKFIVLNSLNQNAKPEGPEQAELGRLSPRAYTAPPACQPPMEPENLDLQSPTKLSASGEDSTIPQASRLNNIVNRSMTGSPRSSSESHSPLYMHPPKCTSCGSQSPQHAEMCLHTAGPTFPEEMGETQSEYSDSSCENGAFFCNECDCRFSEEASLKRHTLQTHSDKPYKCDRCQASFRYKGNLASHKTVHTGEKPYRCNICGAQFNRPANLKTHTRIHSGEKPYKCETCGARFVQVAHLRAHVLIHTGEKPYPCEICGTRFRHLQTLKSHLRIHTGEKPYHCEKCNLHFRHKSQLRLHLRQKHGAITNTKVQYRVSATDLPPELPKAC</sequence>
<evidence type="ECO:0000250" key="1"/>
<evidence type="ECO:0000250" key="2">
    <source>
        <dbReference type="UniProtKB" id="P41183"/>
    </source>
</evidence>
<evidence type="ECO:0000255" key="3">
    <source>
        <dbReference type="PROSITE-ProRule" id="PRU00037"/>
    </source>
</evidence>
<evidence type="ECO:0000255" key="4">
    <source>
        <dbReference type="PROSITE-ProRule" id="PRU00042"/>
    </source>
</evidence>
<evidence type="ECO:0000256" key="5">
    <source>
        <dbReference type="SAM" id="MobiDB-lite"/>
    </source>
</evidence>
<evidence type="ECO:0000269" key="6">
    <source>
    </source>
</evidence>
<evidence type="ECO:0000269" key="7">
    <source>
    </source>
</evidence>
<evidence type="ECO:0000269" key="8">
    <source>
    </source>
</evidence>
<evidence type="ECO:0000269" key="9">
    <source>
    </source>
</evidence>
<evidence type="ECO:0000269" key="10">
    <source>
    </source>
</evidence>
<evidence type="ECO:0000269" key="11">
    <source>
    </source>
</evidence>
<evidence type="ECO:0000269" key="12">
    <source>
    </source>
</evidence>
<evidence type="ECO:0000269" key="13">
    <source>
    </source>
</evidence>
<evidence type="ECO:0000269" key="14">
    <source>
    </source>
</evidence>
<evidence type="ECO:0000269" key="15">
    <source>
    </source>
</evidence>
<evidence type="ECO:0000269" key="16">
    <source>
    </source>
</evidence>
<evidence type="ECO:0000269" key="17">
    <source>
    </source>
</evidence>
<evidence type="ECO:0000269" key="18">
    <source>
    </source>
</evidence>
<evidence type="ECO:0000269" key="19">
    <source>
    </source>
</evidence>
<evidence type="ECO:0000269" key="20">
    <source>
    </source>
</evidence>
<evidence type="ECO:0000269" key="21">
    <source>
    </source>
</evidence>
<evidence type="ECO:0000269" key="22">
    <source>
    </source>
</evidence>
<evidence type="ECO:0000269" key="23">
    <source>
    </source>
</evidence>
<evidence type="ECO:0000269" key="24">
    <source>
    </source>
</evidence>
<evidence type="ECO:0000269" key="25">
    <source>
    </source>
</evidence>
<evidence type="ECO:0000269" key="26">
    <source>
    </source>
</evidence>
<evidence type="ECO:0000269" key="27">
    <source>
    </source>
</evidence>
<evidence type="ECO:0000303" key="28">
    <source ref="5"/>
</evidence>
<evidence type="ECO:0000305" key="29"/>
<evidence type="ECO:0007744" key="30">
    <source>
    </source>
</evidence>
<evidence type="ECO:0007829" key="31">
    <source>
        <dbReference type="PDB" id="2EN2"/>
    </source>
</evidence>
<evidence type="ECO:0007829" key="32">
    <source>
        <dbReference type="PDB" id="2EOS"/>
    </source>
</evidence>
<evidence type="ECO:0007829" key="33">
    <source>
        <dbReference type="PDB" id="2LCE"/>
    </source>
</evidence>
<evidence type="ECO:0007829" key="34">
    <source>
        <dbReference type="PDB" id="2YRM"/>
    </source>
</evidence>
<evidence type="ECO:0007829" key="35">
    <source>
        <dbReference type="PDB" id="3E4U"/>
    </source>
</evidence>
<evidence type="ECO:0007829" key="36">
    <source>
        <dbReference type="PDB" id="6C3L"/>
    </source>
</evidence>
<evidence type="ECO:0007829" key="37">
    <source>
        <dbReference type="PDB" id="7LWE"/>
    </source>
</evidence>
<evidence type="ECO:0007829" key="38">
    <source>
        <dbReference type="PDB" id="7LWG"/>
    </source>
</evidence>
<gene>
    <name type="primary">BCL6</name>
    <name type="synonym">BCL5</name>
    <name type="synonym">LAZ3</name>
    <name type="synonym">ZBTB27</name>
    <name type="synonym">ZNF51</name>
</gene>
<accession>P41182</accession>
<accession>A7E241</accession>
<accession>B8PSA7</accession>
<accession>D3DNV5</accession>
<organism>
    <name type="scientific">Homo sapiens</name>
    <name type="common">Human</name>
    <dbReference type="NCBI Taxonomy" id="9606"/>
    <lineage>
        <taxon>Eukaryota</taxon>
        <taxon>Metazoa</taxon>
        <taxon>Chordata</taxon>
        <taxon>Craniata</taxon>
        <taxon>Vertebrata</taxon>
        <taxon>Euteleostomi</taxon>
        <taxon>Mammalia</taxon>
        <taxon>Eutheria</taxon>
        <taxon>Euarchontoglires</taxon>
        <taxon>Primates</taxon>
        <taxon>Haplorrhini</taxon>
        <taxon>Catarrhini</taxon>
        <taxon>Hominidae</taxon>
        <taxon>Homo</taxon>
    </lineage>
</organism>
<reference key="1">
    <citation type="journal article" date="1993" name="Nat. Genet.">
        <title>LAZ3, a novel zinc-finger encoding gene, is disrupted by recurring chromosome 3q27 translocations in human lymphomas.</title>
        <authorList>
            <person name="Kerckaert J.-P."/>
            <person name="Deweindt C."/>
            <person name="Tilly H."/>
            <person name="Quief S."/>
            <person name="Lecocq G."/>
            <person name="Bastard C."/>
        </authorList>
    </citation>
    <scope>NUCLEOTIDE SEQUENCE [MRNA] (ISOFORM 1)</scope>
    <source>
        <tissue>Skeletal muscle</tissue>
    </source>
</reference>
<reference key="2">
    <citation type="journal article" date="1993" name="Science">
        <title>Alterations of a zinc finger-encoding gene, BCL-6, in diffuse large-cell lymphoma.</title>
        <authorList>
            <person name="Ye B.H."/>
            <person name="Lista F."/>
            <person name="Lo Coco F."/>
            <person name="Knowles D.M."/>
            <person name="Offit K."/>
            <person name="Chaganti R.S.K."/>
            <person name="Dalla-Favera R."/>
        </authorList>
    </citation>
    <scope>NUCLEOTIDE SEQUENCE [MRNA] (ISOFORM 1)</scope>
</reference>
<reference key="3">
    <citation type="journal article" date="1994" name="Blood">
        <title>Gene involved in the 3q27 translocation associated with B-cell lymphoma, BCL5, encodes a Kruppel-like zinc-finger protein.</title>
        <authorList>
            <person name="Miki T."/>
            <person name="Kawamata N."/>
            <person name="Hirosawa S."/>
            <person name="Aoki N."/>
        </authorList>
    </citation>
    <scope>NUCLEOTIDE SEQUENCE [MRNA] (ISOFORM 1)</scope>
    <source>
        <tissue>Liver</tissue>
    </source>
</reference>
<reference key="4">
    <citation type="journal article" date="1993" name="Proc. Natl. Acad. Sci. U.S.A.">
        <title>Identification of the gene associated with the recurring chromosomal translocations t(3;14)(q27;q32) and t(3;22)(q27;q11) in B-cell lymphomas.</title>
        <authorList>
            <person name="Baron B.W."/>
            <person name="Nucifora G."/>
            <person name="McCabe N."/>
            <person name="Espinosa R. III"/>
            <person name="le Beau M.M."/>
            <person name="McKeithan T.W."/>
        </authorList>
    </citation>
    <scope>NUCLEOTIDE SEQUENCE [MRNA] (ISOFORM 1)</scope>
</reference>
<reference key="5">
    <citation type="submission" date="2007-09" db="EMBL/GenBank/DDBJ databases">
        <title>Discovery of a novel BCL6 transcript and its expression in lung cancer.</title>
        <authorList>
            <person name="Mao Y."/>
            <person name="Xiao X."/>
            <person name="He D."/>
            <person name="Luo C."/>
            <person name="Liu C."/>
            <person name="Lv D."/>
        </authorList>
    </citation>
    <scope>NUCLEOTIDE SEQUENCE [MRNA] (ISOFORM 2)</scope>
</reference>
<reference key="6">
    <citation type="journal article" date="2006" name="Nature">
        <title>The DNA sequence, annotation and analysis of human chromosome 3.</title>
        <authorList>
            <person name="Muzny D.M."/>
            <person name="Scherer S.E."/>
            <person name="Kaul R."/>
            <person name="Wang J."/>
            <person name="Yu J."/>
            <person name="Sudbrak R."/>
            <person name="Buhay C.J."/>
            <person name="Chen R."/>
            <person name="Cree A."/>
            <person name="Ding Y."/>
            <person name="Dugan-Rocha S."/>
            <person name="Gill R."/>
            <person name="Gunaratne P."/>
            <person name="Harris R.A."/>
            <person name="Hawes A.C."/>
            <person name="Hernandez J."/>
            <person name="Hodgson A.V."/>
            <person name="Hume J."/>
            <person name="Jackson A."/>
            <person name="Khan Z.M."/>
            <person name="Kovar-Smith C."/>
            <person name="Lewis L.R."/>
            <person name="Lozado R.J."/>
            <person name="Metzker M.L."/>
            <person name="Milosavljevic A."/>
            <person name="Miner G.R."/>
            <person name="Morgan M.B."/>
            <person name="Nazareth L.V."/>
            <person name="Scott G."/>
            <person name="Sodergren E."/>
            <person name="Song X.-Z."/>
            <person name="Steffen D."/>
            <person name="Wei S."/>
            <person name="Wheeler D.A."/>
            <person name="Wright M.W."/>
            <person name="Worley K.C."/>
            <person name="Yuan Y."/>
            <person name="Zhang Z."/>
            <person name="Adams C.Q."/>
            <person name="Ansari-Lari M.A."/>
            <person name="Ayele M."/>
            <person name="Brown M.J."/>
            <person name="Chen G."/>
            <person name="Chen Z."/>
            <person name="Clendenning J."/>
            <person name="Clerc-Blankenburg K.P."/>
            <person name="Chen R."/>
            <person name="Chen Z."/>
            <person name="Davis C."/>
            <person name="Delgado O."/>
            <person name="Dinh H.H."/>
            <person name="Dong W."/>
            <person name="Draper H."/>
            <person name="Ernst S."/>
            <person name="Fu G."/>
            <person name="Gonzalez-Garay M.L."/>
            <person name="Garcia D.K."/>
            <person name="Gillett W."/>
            <person name="Gu J."/>
            <person name="Hao B."/>
            <person name="Haugen E."/>
            <person name="Havlak P."/>
            <person name="He X."/>
            <person name="Hennig S."/>
            <person name="Hu S."/>
            <person name="Huang W."/>
            <person name="Jackson L.R."/>
            <person name="Jacob L.S."/>
            <person name="Kelly S.H."/>
            <person name="Kube M."/>
            <person name="Levy R."/>
            <person name="Li Z."/>
            <person name="Liu B."/>
            <person name="Liu J."/>
            <person name="Liu W."/>
            <person name="Lu J."/>
            <person name="Maheshwari M."/>
            <person name="Nguyen B.-V."/>
            <person name="Okwuonu G.O."/>
            <person name="Palmeiri A."/>
            <person name="Pasternak S."/>
            <person name="Perez L.M."/>
            <person name="Phelps K.A."/>
            <person name="Plopper F.J."/>
            <person name="Qiang B."/>
            <person name="Raymond C."/>
            <person name="Rodriguez R."/>
            <person name="Saenphimmachak C."/>
            <person name="Santibanez J."/>
            <person name="Shen H."/>
            <person name="Shen Y."/>
            <person name="Subramanian S."/>
            <person name="Tabor P.E."/>
            <person name="Verduzco D."/>
            <person name="Waldron L."/>
            <person name="Wang J."/>
            <person name="Wang J."/>
            <person name="Wang Q."/>
            <person name="Williams G.A."/>
            <person name="Wong G.K.-S."/>
            <person name="Yao Z."/>
            <person name="Zhang J."/>
            <person name="Zhang X."/>
            <person name="Zhao G."/>
            <person name="Zhou J."/>
            <person name="Zhou Y."/>
            <person name="Nelson D."/>
            <person name="Lehrach H."/>
            <person name="Reinhardt R."/>
            <person name="Naylor S.L."/>
            <person name="Yang H."/>
            <person name="Olson M."/>
            <person name="Weinstock G."/>
            <person name="Gibbs R.A."/>
        </authorList>
    </citation>
    <scope>NUCLEOTIDE SEQUENCE [LARGE SCALE GENOMIC DNA]</scope>
</reference>
<reference key="7">
    <citation type="submission" date="2005-09" db="EMBL/GenBank/DDBJ databases">
        <authorList>
            <person name="Mural R.J."/>
            <person name="Istrail S."/>
            <person name="Sutton G.G."/>
            <person name="Florea L."/>
            <person name="Halpern A.L."/>
            <person name="Mobarry C.M."/>
            <person name="Lippert R."/>
            <person name="Walenz B."/>
            <person name="Shatkay H."/>
            <person name="Dew I."/>
            <person name="Miller J.R."/>
            <person name="Flanigan M.J."/>
            <person name="Edwards N.J."/>
            <person name="Bolanos R."/>
            <person name="Fasulo D."/>
            <person name="Halldorsson B.V."/>
            <person name="Hannenhalli S."/>
            <person name="Turner R."/>
            <person name="Yooseph S."/>
            <person name="Lu F."/>
            <person name="Nusskern D.R."/>
            <person name="Shue B.C."/>
            <person name="Zheng X.H."/>
            <person name="Zhong F."/>
            <person name="Delcher A.L."/>
            <person name="Huson D.H."/>
            <person name="Kravitz S.A."/>
            <person name="Mouchard L."/>
            <person name="Reinert K."/>
            <person name="Remington K.A."/>
            <person name="Clark A.G."/>
            <person name="Waterman M.S."/>
            <person name="Eichler E.E."/>
            <person name="Adams M.D."/>
            <person name="Hunkapiller M.W."/>
            <person name="Myers E.W."/>
            <person name="Venter J.C."/>
        </authorList>
    </citation>
    <scope>NUCLEOTIDE SEQUENCE [LARGE SCALE GENOMIC DNA]</scope>
</reference>
<reference key="8">
    <citation type="journal article" date="2004" name="Genome Res.">
        <title>The status, quality, and expansion of the NIH full-length cDNA project: the Mammalian Gene Collection (MGC).</title>
        <authorList>
            <consortium name="The MGC Project Team"/>
        </authorList>
    </citation>
    <scope>NUCLEOTIDE SEQUENCE [LARGE SCALE MRNA] (ISOFORM 1)</scope>
</reference>
<reference key="9">
    <citation type="journal article" date="1998" name="Genes Dev.">
        <title>Antigen receptor signaling induces MAP kinase-mediated phosphorylation and degradation of the BCL-6 transcription factor.</title>
        <authorList>
            <person name="Niu H."/>
            <person name="Ye B.H."/>
            <person name="Dalla-Favera R."/>
        </authorList>
    </citation>
    <scope>FUNCTION</scope>
    <scope>TISSUE SPECIFICITY</scope>
    <scope>PHOSPHORYLATION AT SER-333 AND SER-343</scope>
    <scope>MUTAGENESIS OF SER-333 AND SER-343</scope>
    <scope>UBIQUITINATION</scope>
</reference>
<reference key="10">
    <citation type="journal article" date="1999" name="Genes Chromosomes Cancer">
        <title>Nonrandom fusion of L-plastin(LCP1) and LAZ3(BCL6) genes by t(3;13)(q27;q14) chromosome translocation in two cases of B-cell non-Hodgkin lymphoma.</title>
        <authorList>
            <person name="Galiegue-Zouitina S."/>
            <person name="Quief S."/>
            <person name="Hildebrand M.P."/>
            <person name="Denis C."/>
            <person name="Detourmignies L."/>
            <person name="Lai J.L."/>
            <person name="Kerckaert J.P."/>
        </authorList>
    </citation>
    <scope>INVOLVEMENT IN B-CELL NON-HODGKIN LYMPHOMA</scope>
    <scope>CHROMOSOMAL TRANSLOCATION WITH LCP1</scope>
</reference>
<reference key="11">
    <citation type="journal article" date="2000" name="Blood">
        <title>The Ikaros gene, a central regulator of lymphoid differentiation, fuses to the BCL6 gene as a result of t(3;7)(q27;p12) translocation in a patient with diffuse large B-cell lymphoma.</title>
        <authorList>
            <person name="Hosokawa Y."/>
            <person name="Maeda Y."/>
            <person name="Ichinohasama R."/>
            <person name="Miura I."/>
            <person name="Taniwaki M."/>
            <person name="Seto M."/>
        </authorList>
    </citation>
    <scope>INVOLVEMENT IN B-CELL NON-HODGKIN LYMPHOMA</scope>
    <scope>CHROMOSOMAL TRANSLOCATION WITH IKZF1</scope>
</reference>
<reference key="12">
    <citation type="journal article" date="2000" name="Immunity">
        <title>BCL-6 represses genes that function in lymphocyte differentiation, inflammation, and cell cycle control.</title>
        <authorList>
            <person name="Shaffer A.L."/>
            <person name="Yu X."/>
            <person name="He Y."/>
            <person name="Boldrick J."/>
            <person name="Chan E.P."/>
            <person name="Staudt L.M."/>
        </authorList>
    </citation>
    <scope>FUNCTION AS TRANSCRIPTIONAL REPRESSOR</scope>
    <scope>TISSUE SPECIFICITY</scope>
</reference>
<reference key="13">
    <citation type="journal article" date="2002" name="Cancer Res.">
        <title>Characterization of t(3;6)(q27;p21) breakpoints in B-cell non-Hodgkin's lymphoma and construction of the histone H4/BCL6 fusion gene, leading to altered expression of Bcl-6.</title>
        <authorList>
            <person name="Kurata M."/>
            <person name="Maesako Y."/>
            <person name="Ueda C."/>
            <person name="Nishikori M."/>
            <person name="Akasaka T."/>
            <person name="Uchiyama T."/>
            <person name="Ohno H."/>
        </authorList>
    </citation>
    <scope>FUNCTION AS TRANSCRIPTIONAL REPRESSOR</scope>
    <scope>INVOLVEMENT IN B-CELL NON-HODGKIN LYMPHOMA</scope>
    <scope>CHROMOSOMAL TRANSLOCATION WITH HISTONE H4</scope>
</reference>
<reference key="14">
    <citation type="journal article" date="2002" name="Nat. Genet.">
        <title>Acetylation inactivates the transcriptional repressor BCL6.</title>
        <authorList>
            <person name="Bereshchenko O.R."/>
            <person name="Gu W."/>
            <person name="Dalla-Favera R."/>
        </authorList>
    </citation>
    <scope>FUNCTION AS TRANSCRIPTIONAL REPRESSOR</scope>
    <scope>ACETYLATION AT LYS-379</scope>
    <scope>DEACETYLATION</scope>
    <scope>INTERACTION WITH HDAC2</scope>
    <scope>TISSUE SPECIFICITY</scope>
    <scope>MUTAGENESIS OF LYS-376; LYS-377 AND LYS-379</scope>
</reference>
<reference key="15">
    <citation type="journal article" date="2002" name="Oncogene">
        <title>The gene for interleukin-21 receptor is the partner of BCL6 in t(3;16)(q27;p11), which is recurrently observed in diffuse large B-cell lymphoma.</title>
        <authorList>
            <person name="Ueda C."/>
            <person name="Akasaka T."/>
            <person name="Kurata M."/>
            <person name="Maesako Y."/>
            <person name="Nishikori M."/>
            <person name="Ichinohasama R."/>
            <person name="Imada K."/>
            <person name="Uchiyama T."/>
            <person name="Ohno H."/>
        </authorList>
    </citation>
    <scope>INVOLVEMENT IN B-CELL NON-HODGKIN LYMPHOMA</scope>
    <scope>CHROMOSOMAL TRANSLOCATION WITH IL21R</scope>
</reference>
<reference key="16">
    <citation type="journal article" date="2003" name="Biochem. Biophys. Res. Commun.">
        <title>Point mutations in BCL6 DNA-binding domain reveal distinct roles for the six zinc fingers.</title>
        <authorList>
            <person name="Mascle X."/>
            <person name="Albagli O."/>
            <person name="Lemercier C."/>
        </authorList>
    </citation>
    <scope>FUNCTION AS TRANSCRIPTIONAL REPRESSOR</scope>
    <scope>DNA-BINDING</scope>
    <scope>SUBCELLULAR LOCATION</scope>
    <scope>INTERACTION WITH HDAC5</scope>
    <scope>MUTAGENESIS OF 520-CYS--CYS-523; 548-CYS--CYS-551; 576-CYS--CYS-579; 604-CYS--CYS-607; 632-CYS--CYS-635 AND 660-CYS--CYS-663</scope>
</reference>
<reference key="17">
    <citation type="journal article" date="2003" name="J. Biol. Chem.">
        <title>The histone deacetylase 9 gene encodes multiple protein isoforms.</title>
        <authorList>
            <person name="Petrie K."/>
            <person name="Guidez F."/>
            <person name="Howell L."/>
            <person name="Healy L."/>
            <person name="Waxman S."/>
            <person name="Greaves M."/>
            <person name="Zelent A."/>
        </authorList>
    </citation>
    <scope>INTERACTION WITH HDAC9</scope>
</reference>
<reference key="18">
    <citation type="journal article" date="2004" name="Cell">
        <title>MTA3 and the Mi-2/NuRD complex regulate cell fate during B lymphocyte differentiation.</title>
        <authorList>
            <person name="Fujita N."/>
            <person name="Jaye D.L."/>
            <person name="Geigerman C."/>
            <person name="Akyildiz A."/>
            <person name="Mooney M.R."/>
            <person name="Boss J.M."/>
            <person name="Wade P.A."/>
        </authorList>
    </citation>
    <scope>FUNCTION IN B-CELL DIFFERENTIATION</scope>
    <scope>INTERACTION WITH NCOR1; NCOR2 AND NURD COMPLEX</scope>
    <scope>ACETYLATION</scope>
    <scope>TISSUE SPECIFICITY</scope>
    <scope>MUTAGENESIS OF LYS-379 AND 376-LYS--LYS-379</scope>
</reference>
<reference key="19">
    <citation type="journal article" date="2004" name="Nature">
        <title>The BCL6 proto-oncogene suppresses p53 expression in germinal-centre B-cells.</title>
        <authorList>
            <person name="Phan R.T."/>
            <person name="Dalla-Favera R."/>
        </authorList>
    </citation>
    <scope>FUNCTION AS TP53 TRANSCRIPTIONAL REPRESSOR</scope>
</reference>
<reference key="20">
    <citation type="journal article" date="2005" name="Nat. Immunol.">
        <title>BCL6 interacts with the transcription factor Miz-1 to suppress the cyclin-dependent kinase inhibitor p21 and cell cycle arrest in germinal center B cells.</title>
        <authorList>
            <person name="Phan R.T."/>
            <person name="Saito M."/>
            <person name="Basso K."/>
            <person name="Niu H."/>
            <person name="Dalla-Favera R."/>
        </authorList>
    </citation>
    <scope>FUNCTION AS TRANSCRIPTIONAL REPRESSOR</scope>
    <scope>INTERACTION WITH ZBTB17</scope>
    <scope>TISSUE SPECIFICITY</scope>
</reference>
<reference key="21">
    <citation type="journal article" date="2006" name="Exp. Cell Res.">
        <title>Plastic downregulation of the transcriptional repressor BCL6 during maturation of human dendritic cells.</title>
        <authorList>
            <person name="Pantano S."/>
            <person name="Jarrossay D."/>
            <person name="Saccani S."/>
            <person name="Bosisio D."/>
            <person name="Natoli G."/>
        </authorList>
    </citation>
    <scope>INDUCTION</scope>
    <scope>TISSUE SPECIFICITY</scope>
</reference>
<reference key="22">
    <citation type="journal article" date="2007" name="Nat. Immunol.">
        <title>Genotoxic stress regulates expression of the proto-oncogene Bcl6 in germinal center B cells.</title>
        <authorList>
            <person name="Phan R.T."/>
            <person name="Saito M."/>
            <person name="Kitagawa Y."/>
            <person name="Means A.R."/>
            <person name="Dalla-Favera R."/>
        </authorList>
    </citation>
    <scope>FUNCTION</scope>
    <scope>PHOSPHORYLATION BY ATM</scope>
    <scope>INDUCTION BY GENOTOXIC STRESS</scope>
    <scope>INTERACTION WITH PIN1</scope>
    <scope>SUBCELLULAR LOCATION</scope>
    <scope>TISSUE SPECIFICITY</scope>
    <scope>MUTAGENESIS OF THR-190; SER-250 AND SER-260</scope>
</reference>
<reference key="23">
    <citation type="journal article" date="2008" name="Mol. Cell. Biol.">
        <title>CtBP is an essential corepressor for BCL6 autoregulation.</title>
        <authorList>
            <person name="Mendez L.M."/>
            <person name="Polo J.M."/>
            <person name="Yu J.J."/>
            <person name="Krupski M."/>
            <person name="Ding B.B."/>
            <person name="Melnick A."/>
            <person name="Ye B.H."/>
        </authorList>
    </citation>
    <scope>FUNCTION AS AUTOINHIBITOR</scope>
    <scope>INTERACTION WITH CTBP1; HDAC2 AND NCOR2</scope>
    <scope>TISSUE SPECIFICITY</scope>
    <scope>MUTAGENESIS OF ASN-21; HIS-116 AND 376-LYS--LYS-379</scope>
</reference>
<reference key="24">
    <citation type="journal article" date="2012" name="J. Exp. Med.">
        <title>BCL6 positively regulates AID and germinal center gene expression via repression of miR-155.</title>
        <authorList>
            <person name="Basso K."/>
            <person name="Schneider C."/>
            <person name="Shen Q."/>
            <person name="Holmes A.B."/>
            <person name="Setty M."/>
            <person name="Leslie C."/>
            <person name="Dalla-Favera R."/>
        </authorList>
    </citation>
    <scope>FUNCTION IN MIRNA REGULATION</scope>
    <scope>SUBCELLULAR LOCATION</scope>
</reference>
<reference key="25">
    <citation type="journal article" date="2012" name="Nature">
        <title>FBXO11 targets BCL6 for degradation and is inactivated in diffuse large B-cell lymphomas.</title>
        <authorList>
            <person name="Duan S."/>
            <person name="Cermak L."/>
            <person name="Pagan J.K."/>
            <person name="Rossi M."/>
            <person name="Martinengo C."/>
            <person name="di Celle P.F."/>
            <person name="Chapuy B."/>
            <person name="Shipp M."/>
            <person name="Chiarle R."/>
            <person name="Pagano M."/>
        </authorList>
    </citation>
    <scope>FUNCTION</scope>
    <scope>INTERACTION WITH SCF(FBXO11) COMPLEX</scope>
    <scope>UBIQUITINATION</scope>
    <scope>PHOSPHORYLATION</scope>
    <scope>SUBCELLULAR LOCATION</scope>
</reference>
<reference key="26">
    <citation type="journal article" date="2013" name="Cell Rep.">
        <title>A hybrid mechanism of action for BCL6 in B cells defined by formation of functionally distinct complexes at enhancers and promoters.</title>
        <authorList>
            <person name="Hatzi K."/>
            <person name="Jiang Y."/>
            <person name="Huang C."/>
            <person name="Garrett-Bakelman F."/>
            <person name="Gearhart M.D."/>
            <person name="Giannopoulou E.G."/>
            <person name="Zumbo P."/>
            <person name="Kirouac K."/>
            <person name="Bhaskara S."/>
            <person name="Polo J.M."/>
            <person name="Kormaksson M."/>
            <person name="Mackerell A.D. Jr."/>
            <person name="Xue F."/>
            <person name="Mason C.E."/>
            <person name="Hiebert S.W."/>
            <person name="Prive G.G."/>
            <person name="Cerchietti L."/>
            <person name="Bardwell V.J."/>
            <person name="Elemento O."/>
            <person name="Melnick A."/>
        </authorList>
    </citation>
    <scope>FUNCTION AS TRANSCRIPTIONAL REPRESSOR</scope>
    <scope>INTERACTION WITH BCOR; HDAC3; NCOR1 AND NCOR2</scope>
    <scope>DNA-BINDING</scope>
</reference>
<reference key="27">
    <citation type="journal article" date="2013" name="J. Proteome Res.">
        <title>Toward a comprehensive characterization of a human cancer cell phosphoproteome.</title>
        <authorList>
            <person name="Zhou H."/>
            <person name="Di Palma S."/>
            <person name="Preisinger C."/>
            <person name="Peng M."/>
            <person name="Polat A.N."/>
            <person name="Heck A.J."/>
            <person name="Mohammed S."/>
        </authorList>
    </citation>
    <scope>PHOSPHORYLATION [LARGE SCALE ANALYSIS] AT SER-333</scope>
    <scope>IDENTIFICATION BY MASS SPECTROMETRY [LARGE SCALE ANALYSIS]</scope>
    <source>
        <tissue>Cervix carcinoma</tissue>
    </source>
</reference>
<reference key="28">
    <citation type="journal article" date="2018" name="Science">
        <title>Dimerization quality control ensures neuronal development and survival.</title>
        <authorList>
            <person name="Mena E.L."/>
            <person name="Kjolby R.A.S."/>
            <person name="Saxton R.A."/>
            <person name="Werner A."/>
            <person name="Lew B.G."/>
            <person name="Boyle J.M."/>
            <person name="Harland R."/>
            <person name="Rape M."/>
        </authorList>
    </citation>
    <scope>UBIQUITINATION</scope>
    <scope>MUTAGENESIS OF SER-59</scope>
</reference>
<reference key="29">
    <citation type="journal article" date="2003" name="Mol. Cell">
        <title>Mechanism of SMRT corepressor recruitment by the BCL6 BTB domain.</title>
        <authorList>
            <person name="Ahmad K.F."/>
            <person name="Melnick A."/>
            <person name="Lax S."/>
            <person name="Bouchard D."/>
            <person name="Liu J."/>
            <person name="Kiang C.L."/>
            <person name="Mayer S."/>
            <person name="Takahashi S."/>
            <person name="Licht J.D."/>
            <person name="Prive G.G."/>
        </authorList>
    </citation>
    <scope>X-RAY CRYSTALLOGRAPHY (2.2 ANGSTROMS) OF 5-129 IN COMPLEX WITH NCOR2</scope>
</reference>
<reference key="30">
    <citation type="submission" date="2007-10" db="PDB data bank">
        <title>Solution structure of the C2H2 type zinc finger (region 598-654) of human B-cell lymphoma 6 protein.</title>
        <authorList>
            <consortium name="RIKEN structural genomics initiative (RSGI)"/>
        </authorList>
    </citation>
    <scope>STRUCTURE BY NMR OF 598-657</scope>
</reference>
<reference key="31">
    <citation type="journal article" date="2008" name="Acta Crystallogr. F">
        <title>Structure of the wild-type human BCL6 POZ domain.</title>
        <authorList>
            <person name="Stead M.A."/>
            <person name="Rosbrook G.O."/>
            <person name="Hadden J.M."/>
            <person name="Trinh C.H."/>
            <person name="Carr S.B."/>
            <person name="Wright S.C."/>
        </authorList>
    </citation>
    <scope>X-RAY CRYSTALLOGRAPHY (2.1 ANGSTROMS) OF 5-129</scope>
</reference>
<reference key="32">
    <citation type="journal article" date="2008" name="Mol. Cell">
        <title>Structure of a BCOR corepressor peptide in complex with the BCL6 BTB domain dimer.</title>
        <authorList>
            <person name="Ghetu A.F."/>
            <person name="Corcoran C.M."/>
            <person name="Cerchietti L."/>
            <person name="Bardwell V.J."/>
            <person name="Melnick A."/>
            <person name="Prive G.G."/>
        </authorList>
    </citation>
    <scope>X-RAY CRYSTALLOGRAPHY (2.6 ANGSTROMS) OF 5-129 IN COMPLEX WITH BCOR</scope>
    <scope>FUNCTION</scope>
    <scope>SUBUNIT</scope>
</reference>
<reference key="33">
    <citation type="journal article" date="2010" name="Cancer Cell">
        <title>A small-molecule inhibitor of BCL6 kills DLBCL cells in vitro and in vivo.</title>
        <authorList>
            <person name="Cerchietti L.C."/>
            <person name="Ghetu A.F."/>
            <person name="Zhu X."/>
            <person name="Da Silva G.F."/>
            <person name="Zhong S."/>
            <person name="Matthews M."/>
            <person name="Bunting K.L."/>
            <person name="Polo J.M."/>
            <person name="Fares C."/>
            <person name="Arrowsmith C.H."/>
            <person name="Yang S.N."/>
            <person name="Garcia M."/>
            <person name="Coop A."/>
            <person name="Mackerell A.D. Jr."/>
            <person name="Prive G.G."/>
            <person name="Melnick A."/>
        </authorList>
    </citation>
    <scope>X-RAY CRYSTALLOGRAPHY (2.3 ANGSTROMS) OF 5-129 IN COMPLEX WITH INHIBITOR</scope>
</reference>
<name>BCL6_HUMAN</name>
<protein>
    <recommendedName>
        <fullName>B-cell lymphoma 6 protein</fullName>
        <shortName>BCL-6</shortName>
    </recommendedName>
    <alternativeName>
        <fullName>B-cell lymphoma 5 protein</fullName>
        <shortName>BCL-5</shortName>
    </alternativeName>
    <alternativeName>
        <fullName>Protein LAZ-3</fullName>
    </alternativeName>
    <alternativeName>
        <fullName>Zinc finger and BTB domain-containing protein 27</fullName>
    </alternativeName>
    <alternativeName>
        <fullName>Zinc finger protein 51</fullName>
    </alternativeName>
</protein>
<comment type="function">
    <text evidence="8 10 11 12 15 16 17 19 20 21 23 24 25 27">Transcriptional repressor mainly required for germinal center (GC) formation and antibody affinity maturation which has different mechanisms of action specific to the lineage and biological functions. Forms complexes with different corepressors and histone deacetylases to repress the transcriptional expression of different subsets of target genes. Represses its target genes by binding directly to the DNA sequence 5'-TTCCTAGAA-3' (BCL6-binding site) or indirectly by repressing the transcriptional activity of transcription factors. In GC B-cells, represses genes that function in differentiation, inflammation, apoptosis and cell cycle control, also autoregulates its transcriptional expression and up-regulates, indirectly, the expression of some genes important for GC reactions, such as AICDA, through the repression of microRNAs expression, like miR155. An important function is to allow GC B-cells to proliferate very rapidly in response to T-cell dependent antigens and tolerate the physiological DNA breaks required for immunglobulin class switch recombination and somatic hypermutation without inducing a p53/TP53-dependent apoptotic response. In follicular helper CD4(+) T-cells (T(FH) cells), promotes the expression of T(FH)-related genes but inhibits the differentiation of T(H)1, T(H)2 and T(H)17 cells. Also required for the establishment and maintenance of immunological memory for both T- and B-cells. Suppresses macrophage proliferation through competition with STAT5 for STAT-binding motifs binding on certain target genes, such as CCL2 and CCND2. In response to genotoxic stress, controls cell cycle arrest in GC B-cells in both p53/TP53-dependedent and -independent manners. Besides, also controls neurogenesis through the alteration of the composition of NOTCH-dependent transcriptional complexes at selective NOTCH targets, such as HES5, including the recruitment of the deacetylase SIRT1 and resulting in an epigenetic silencing leading to neuronal differentiation.</text>
</comment>
<comment type="subunit">
    <text evidence="10 12 13 14 15 17 19 20 21 22 23 25">Homodimer. Interacts (via BTB domain) with the corepressors BCOR, NCOR1 and SMRT/NCOR2; the interactions are direct. Forms preferably ternary complexes with BCOR and SMRT/NCOR2 on target gene promoters but, on enhancer elements, interacts with SMRT/NCOR2 and HDAC3 to repress proximal gene expression. Interacts with histone deacetylases HDAC2, HDAC5 and HDAC9 (via the catalytic domain). Interacts with ZBTB7 and BCL6B. Interacts with SCF(FBXO11) complex; the interaction is independent of phosphorylation and promotes ubiquitination. Interacts (when phosphorylated) with PIN1; the interaction is required for BCL6 degradation upon genotoxic stress. Interacts with ZBTB17; inhibits ZBTB17 transcriptional activity. Interacts with CTBP1, autoinhibits its transcriptional expression. Interacts with NOTCH1 NCID and SIRT1; leads to a epigenetic repression of selective NOTCH1-target genes. Interacts (nor via BTB domain neither acetylated) with the NuRD complex components CHD4, HDAC1, MBD3 and MTA3; the interaction with MTA3 inhibits BCL6 acetylation and is required for BCL6 transpriptional repression.</text>
</comment>
<comment type="interaction">
    <interactant intactId="EBI-765407">
        <id>P41182</id>
    </interactant>
    <interactant intactId="EBI-13345447">
        <id>Q8N9V6-2</id>
        <label>ANKRD53</label>
    </interactant>
    <organismsDiffer>false</organismsDiffer>
    <experiments>3</experiments>
</comment>
<comment type="interaction">
    <interactant intactId="EBI-765407">
        <id>P41182</id>
    </interactant>
    <interactant intactId="EBI-2875665">
        <id>Q96B67</id>
        <label>ARRDC3</label>
    </interactant>
    <organismsDiffer>false</organismsDiffer>
    <experiments>3</experiments>
</comment>
<comment type="interaction">
    <interactant intactId="EBI-765407">
        <id>P41182</id>
    </interactant>
    <interactant intactId="EBI-12811889">
        <id>Q9Y6H3</id>
        <label>ATP23</label>
    </interactant>
    <organismsDiffer>false</organismsDiffer>
    <experiments>3</experiments>
</comment>
<comment type="interaction">
    <interactant intactId="EBI-765407">
        <id>P41182</id>
    </interactant>
    <interactant intactId="EBI-765407">
        <id>P41182</id>
        <label>BCL6</label>
    </interactant>
    <organismsDiffer>false</organismsDiffer>
    <experiments>4</experiments>
</comment>
<comment type="interaction">
    <interactant intactId="EBI-765407">
        <id>P41182</id>
    </interactant>
    <interactant intactId="EBI-10174813">
        <id>A8KA13</id>
        <label>BCL6B</label>
    </interactant>
    <organismsDiffer>false</organismsDiffer>
    <experiments>3</experiments>
</comment>
<comment type="interaction">
    <interactant intactId="EBI-765407">
        <id>P41182</id>
    </interactant>
    <interactant intactId="EBI-2548012">
        <id>Q9H2G9</id>
        <label>BLZF1</label>
    </interactant>
    <organismsDiffer>false</organismsDiffer>
    <experiments>4</experiments>
</comment>
<comment type="interaction">
    <interactant intactId="EBI-765407">
        <id>P41182</id>
    </interactant>
    <interactant intactId="EBI-11901329">
        <id>Q6P656</id>
        <label>CFAP161</label>
    </interactant>
    <organismsDiffer>false</organismsDiffer>
    <experiments>3</experiments>
</comment>
<comment type="interaction">
    <interactant intactId="EBI-765407">
        <id>P41182</id>
    </interactant>
    <interactant intactId="EBI-12870048">
        <id>B2RV13</id>
        <label>CFAP97D1</label>
    </interactant>
    <organismsDiffer>false</organismsDiffer>
    <experiments>3</experiments>
</comment>
<comment type="interaction">
    <interactant intactId="EBI-765407">
        <id>P41182</id>
    </interactant>
    <interactant intactId="EBI-743033">
        <id>Q9NZN8</id>
        <label>CNOT2</label>
    </interactant>
    <organismsDiffer>false</organismsDiffer>
    <experiments>3</experiments>
</comment>
<comment type="interaction">
    <interactant intactId="EBI-765407">
        <id>P41182</id>
    </interactant>
    <interactant intactId="EBI-714918">
        <id>Q9NTM9</id>
        <label>CUTC</label>
    </interactant>
    <organismsDiffer>false</organismsDiffer>
    <experiments>3</experiments>
</comment>
<comment type="interaction">
    <interactant intactId="EBI-765407">
        <id>P41182</id>
    </interactant>
    <interactant intactId="EBI-1047804">
        <id>Q86XK2</id>
        <label>FBXO11</label>
    </interactant>
    <organismsDiffer>false</organismsDiffer>
    <experiments>9</experiments>
</comment>
<comment type="interaction">
    <interactant intactId="EBI-765407">
        <id>P41182</id>
    </interactant>
    <interactant intactId="EBI-618309">
        <id>Q08379</id>
        <label>GOLGA2</label>
    </interactant>
    <organismsDiffer>false</organismsDiffer>
    <experiments>5</experiments>
</comment>
<comment type="interaction">
    <interactant intactId="EBI-765407">
        <id>P41182</id>
    </interactant>
    <interactant intactId="EBI-308629">
        <id>P56524</id>
        <label>HDAC4</label>
    </interactant>
    <organismsDiffer>false</organismsDiffer>
    <experiments>3</experiments>
</comment>
<comment type="interaction">
    <interactant intactId="EBI-765407">
        <id>P41182</id>
    </interactant>
    <interactant intactId="EBI-765444">
        <id>Q9UKV0</id>
        <label>HDAC9</label>
    </interactant>
    <organismsDiffer>false</organismsDiffer>
    <experiments>2</experiments>
</comment>
<comment type="interaction">
    <interactant intactId="EBI-765407">
        <id>P41182</id>
    </interactant>
    <interactant intactId="EBI-2125614">
        <id>Q9BVG8</id>
        <label>KIFC3</label>
    </interactant>
    <organismsDiffer>false</organismsDiffer>
    <experiments>3</experiments>
</comment>
<comment type="interaction">
    <interactant intactId="EBI-765407">
        <id>P41182</id>
    </interactant>
    <interactant intactId="EBI-740929">
        <id>Q53G59</id>
        <label>KLHL12</label>
    </interactant>
    <organismsDiffer>false</organismsDiffer>
    <experiments>3</experiments>
</comment>
<comment type="interaction">
    <interactant intactId="EBI-765407">
        <id>P41182</id>
    </interactant>
    <interactant intactId="EBI-10693436">
        <id>Q9BS75</id>
        <label>KLHL20</label>
    </interactant>
    <organismsDiffer>false</organismsDiffer>
    <experiments>3</experiments>
</comment>
<comment type="interaction">
    <interactant intactId="EBI-765407">
        <id>P41182</id>
    </interactant>
    <interactant intactId="EBI-11953846">
        <id>Q52LG2</id>
        <label>KRTAP13-2</label>
    </interactant>
    <organismsDiffer>false</organismsDiffer>
    <experiments>3</experiments>
</comment>
<comment type="interaction">
    <interactant intactId="EBI-765407">
        <id>P41182</id>
    </interactant>
    <interactant intactId="EBI-12811111">
        <id>Q8IUB9</id>
        <label>KRTAP19-1</label>
    </interactant>
    <organismsDiffer>false</organismsDiffer>
    <experiments>3</experiments>
</comment>
<comment type="interaction">
    <interactant intactId="EBI-765407">
        <id>P41182</id>
    </interactant>
    <interactant intactId="EBI-10196832">
        <id>P0CW20</id>
        <label>LIMS4</label>
    </interactant>
    <organismsDiffer>false</organismsDiffer>
    <experiments>6</experiments>
</comment>
<comment type="interaction">
    <interactant intactId="EBI-765407">
        <id>P41182</id>
    </interactant>
    <interactant intactId="EBI-10302990">
        <id>Q9BYU1</id>
        <label>PBX4</label>
    </interactant>
    <organismsDiffer>false</organismsDiffer>
    <experiments>3</experiments>
</comment>
<comment type="interaction">
    <interactant intactId="EBI-765407">
        <id>P41182</id>
    </interactant>
    <interactant intactId="EBI-357275">
        <id>Q99471</id>
        <label>PFDN5</label>
    </interactant>
    <organismsDiffer>false</organismsDiffer>
    <experiments>3</experiments>
</comment>
<comment type="interaction">
    <interactant intactId="EBI-765407">
        <id>P41182</id>
    </interactant>
    <interactant intactId="EBI-11986735">
        <id>Q8WVV4-1</id>
        <label>POF1B</label>
    </interactant>
    <organismsDiffer>false</organismsDiffer>
    <experiments>3</experiments>
</comment>
<comment type="interaction">
    <interactant intactId="EBI-765407">
        <id>P41182</id>
    </interactant>
    <interactant intactId="EBI-9089276">
        <id>Q8NI37</id>
        <label>PPTC7</label>
    </interactant>
    <organismsDiffer>false</organismsDiffer>
    <experiments>3</experiments>
</comment>
<comment type="interaction">
    <interactant intactId="EBI-765407">
        <id>P41182</id>
    </interactant>
    <interactant intactId="EBI-603350">
        <id>P28070</id>
        <label>PSMB4</label>
    </interactant>
    <organismsDiffer>false</organismsDiffer>
    <experiments>3</experiments>
</comment>
<comment type="interaction">
    <interactant intactId="EBI-765407">
        <id>P41182</id>
    </interactant>
    <interactant intactId="EBI-10829018">
        <id>Q04864-2</id>
        <label>REL</label>
    </interactant>
    <organismsDiffer>false</organismsDiffer>
    <experiments>3</experiments>
</comment>
<comment type="interaction">
    <interactant intactId="EBI-765407">
        <id>P41182</id>
    </interactant>
    <interactant intactId="EBI-747107">
        <id>Q8IUQ4</id>
        <label>SIAH1</label>
    </interactant>
    <organismsDiffer>false</organismsDiffer>
    <experiments>3</experiments>
</comment>
<comment type="interaction">
    <interactant intactId="EBI-765407">
        <id>P41182</id>
    </interactant>
    <interactant intactId="EBI-12020542">
        <id>Q96LM5</id>
        <label>SPMIP2</label>
    </interactant>
    <organismsDiffer>false</organismsDiffer>
    <experiments>3</experiments>
</comment>
<comment type="interaction">
    <interactant intactId="EBI-765407">
        <id>P41182</id>
    </interactant>
    <interactant intactId="EBI-10174456">
        <id>Q8N865</id>
        <label>SPMIP4</label>
    </interactant>
    <organismsDiffer>false</organismsDiffer>
    <experiments>3</experiments>
</comment>
<comment type="interaction">
    <interactant intactId="EBI-765407">
        <id>P41182</id>
    </interactant>
    <interactant intactId="EBI-10269322">
        <id>Q8NCR6</id>
        <label>SPMIP6</label>
    </interactant>
    <organismsDiffer>false</organismsDiffer>
    <experiments>3</experiments>
</comment>
<comment type="interaction">
    <interactant intactId="EBI-765407">
        <id>P41182</id>
    </interactant>
    <interactant intactId="EBI-750487">
        <id>Q8WW24</id>
        <label>TEKT4</label>
    </interactant>
    <organismsDiffer>false</organismsDiffer>
    <experiments>3</experiments>
</comment>
<comment type="interaction">
    <interactant intactId="EBI-765407">
        <id>P41182</id>
    </interactant>
    <interactant intactId="EBI-717810">
        <id>Q08117</id>
        <label>TLE5</label>
    </interactant>
    <organismsDiffer>false</organismsDiffer>
    <experiments>3</experiments>
</comment>
<comment type="interaction">
    <interactant intactId="EBI-765407">
        <id>P41182</id>
    </interactant>
    <interactant intactId="EBI-396540">
        <id>Q12888</id>
        <label>TP53BP1</label>
    </interactant>
    <organismsDiffer>false</organismsDiffer>
    <experiments>3</experiments>
</comment>
<comment type="interaction">
    <interactant intactId="EBI-765407">
        <id>P41182</id>
    </interactant>
    <interactant intactId="EBI-359224">
        <id>Q13077</id>
        <label>TRAF1</label>
    </interactant>
    <organismsDiffer>false</organismsDiffer>
    <experiments>5</experiments>
</comment>
<comment type="interaction">
    <interactant intactId="EBI-765407">
        <id>P41182</id>
    </interactant>
    <interactant intactId="EBI-355744">
        <id>Q12933</id>
        <label>TRAF2</label>
    </interactant>
    <organismsDiffer>false</organismsDiffer>
    <experiments>3</experiments>
</comment>
<comment type="interaction">
    <interactant intactId="EBI-765407">
        <id>P41182</id>
    </interactant>
    <interactant intactId="EBI-492476">
        <id>Q96RU7</id>
        <label>TRIB3</label>
    </interactant>
    <organismsDiffer>false</organismsDiffer>
    <experiments>4</experiments>
</comment>
<comment type="interaction">
    <interactant intactId="EBI-765407">
        <id>P41182</id>
    </interactant>
    <interactant intactId="EBI-7705033">
        <id>Q9BRX9</id>
        <label>WDR83</label>
    </interactant>
    <organismsDiffer>false</organismsDiffer>
    <experiments>3</experiments>
</comment>
<comment type="interaction">
    <interactant intactId="EBI-765407">
        <id>P41182</id>
    </interactant>
    <interactant intactId="EBI-740434">
        <id>O15156</id>
        <label>ZBTB7B</label>
    </interactant>
    <organismsDiffer>false</organismsDiffer>
    <experiments>3</experiments>
</comment>
<comment type="interaction">
    <interactant intactId="EBI-765407">
        <id>P41182</id>
    </interactant>
    <interactant intactId="EBI-765834">
        <id>Q9ULU4</id>
        <label>ZMYND8</label>
    </interactant>
    <organismsDiffer>false</organismsDiffer>
    <experiments>3</experiments>
</comment>
<comment type="interaction">
    <interactant intactId="EBI-765407">
        <id>P41182</id>
    </interactant>
    <interactant intactId="EBI-347522">
        <id>O43257</id>
        <label>ZNHIT1</label>
    </interactant>
    <organismsDiffer>false</organismsDiffer>
    <experiments>3</experiments>
</comment>
<comment type="interaction">
    <interactant intactId="EBI-765407">
        <id>P41182</id>
    </interactant>
    <interactant intactId="EBI-296306">
        <id>P45481</id>
        <label>Crebbp</label>
    </interactant>
    <organismsDiffer>true</organismsDiffer>
    <experiments>2</experiments>
</comment>
<comment type="subcellular location">
    <subcellularLocation>
        <location evidence="12 19 23 24">Nucleus</location>
    </subcellularLocation>
</comment>
<comment type="alternative products">
    <event type="alternative splicing"/>
    <isoform>
        <id>P41182-1</id>
        <name>1</name>
        <sequence type="displayed"/>
    </isoform>
    <isoform>
        <id>P41182-2</id>
        <name>2</name>
        <sequence type="described" ref="VSP_042709"/>
    </isoform>
</comment>
<comment type="tissue specificity">
    <text evidence="8 10 15 17 18 19 20 27">Expressed in germinal center T- and B-cells and in primary immature dendritic cells.</text>
</comment>
<comment type="induction">
    <text evidence="18 19">Down-regulated during maturation of dendritic cells by selective stimuli such as bacterial lipopolysaccharides (LPS), CD40LG and zymosan. Protein levels decreases upon genotoxic stress in a dose- and time-dependent way.</text>
</comment>
<comment type="domain">
    <text evidence="1 20">The BTB domain mediates homodimerization. Its dimer interface mediates peptide binding such as to corepressors BCOR and NCOR2 (PubMed:18212045). Interaction with corepressors through the BTB domain is needed to facilitate the rapid proliferation and survival of GC B-cells but is not involved in the T(FH) formation and BCL6-mediated suppression of T(H)2 and T(H)17 differentiationrequired for GC formation (By similarity).</text>
</comment>
<comment type="PTM">
    <text evidence="19 23 27">Phosphorylated by MAPK1 in response to antigen receptor activation at Ser-333 and Ser-343. Phosphorylated by ATM in response to genotoxic stress. Phosphorylation induces its degradation by ubiquitin/proteasome pathway.</text>
</comment>
<comment type="PTM">
    <text evidence="23 26 27">Polyubiquitinated (PubMed:22113614, PubMed:30190310, PubMed:9649500). Polyubiquitinated by SCF(FBXO11), leading to its degradation by the proteasome (PubMed:22113614). Ubiquitinated by the SCF(FBXL17) complex, leading to its degradation by the proteasome: ubiquitination by the SCF(FBXL17) complex takes place when aberrant BTB domain dimers are formed (PubMed:30190310).</text>
</comment>
<comment type="PTM">
    <text evidence="10 15">Acetylated at Lys-379 by EP300 which inhibits the interaction with NuRD complex and the transcriptional repressor function. Deacetylated by HDAC- and SIR2-dependent pathways.</text>
</comment>
<comment type="disease">
    <text evidence="6 7 9 11">Chromosomal aberrations involving BCL6 are a cause of B-cell non-Hodgkin lymphomas (B-cell NHL), including diffuse large B-cell lymphoma and follicular lymphoma. Approximately 40% of diffuse large B-cell lymphomas and 5 to 10% of follicular lymphomas are associated with chromosomal translocations that deregulate expression of BCL6 by juxtaposing heterologous promoters to the BCL6 coding domain (PubMed:10469447, PubMed:10753856, PubMed:11821949, PubMed:12414651). Translocation t(3;14)(q27;q32). Translocation t(3;22)(q27;q11) with immunoglobulin gene regions (PubMed:11821949). Translocation t(3;7)(q27;p12) with IKZF1 gene 5'non-coding region (PubMed:10753856). Translocation t(3;6)(q27;p21) with Histone H4 (PubMed:12414651). Translocation t(3;16)(q27;p11) with IL21R. Translocation t(3;13)(q27;q14) with LCP1 (PubMed:10469447).</text>
</comment>
<comment type="disease">
    <text>A chromosomal aberration involving BCL6 may be a cause of a form of B-cell leukemia. Translocation t(3;11)(q27;q23) with POU2AF1/OBF1.</text>
</comment>
<comment type="disease">
    <text>A chromosomal aberration involving BCL6 may be a cause of lymphoma. Translocation t(3;4)(q27;p11) with ARHH/TTF.</text>
</comment>
<comment type="online information" name="Atlas of Genetics and Cytogenetics in Oncology and Haematology">
    <link uri="https://atlasgeneticsoncology.org/gene/20/BCL6"/>
</comment>
<keyword id="KW-0002">3D-structure</keyword>
<keyword id="KW-0007">Acetylation</keyword>
<keyword id="KW-0010">Activator</keyword>
<keyword id="KW-0025">Alternative splicing</keyword>
<keyword id="KW-0160">Chromosomal rearrangement</keyword>
<keyword id="KW-0238">DNA-binding</keyword>
<keyword id="KW-0391">Immunity</keyword>
<keyword id="KW-0395">Inflammatory response</keyword>
<keyword id="KW-0479">Metal-binding</keyword>
<keyword id="KW-0539">Nucleus</keyword>
<keyword id="KW-0597">Phosphoprotein</keyword>
<keyword id="KW-1267">Proteomics identification</keyword>
<keyword id="KW-0656">Proto-oncogene</keyword>
<keyword id="KW-1185">Reference proteome</keyword>
<keyword id="KW-0677">Repeat</keyword>
<keyword id="KW-0678">Repressor</keyword>
<keyword id="KW-0804">Transcription</keyword>
<keyword id="KW-0805">Transcription regulation</keyword>
<keyword id="KW-0832">Ubl conjugation</keyword>
<keyword id="KW-0862">Zinc</keyword>
<keyword id="KW-0863">Zinc-finger</keyword>
<proteinExistence type="evidence at protein level"/>